<name>MDR1_HUMAN</name>
<accession>P08183</accession>
<accession>A8K294</accession>
<accession>B5AK60</accession>
<accession>Q12755</accession>
<accession>Q14812</accession>
<sequence>MDLEGDRNGGAKKKNFFKLNNKSEKDKKEKKPTVSVFSMFRYSNWLDKLYMVVGTLAAIIHGAGLPLMMLVFGEMTDIFANAGNLEDLMSNITNRSDINDTGFFMNLEEDMTRYAYYYSGIGAGVLVAAYIQVSFWCLAAGRQIHKIRKQFFHAIMRQEIGWFDVHDVGELNTRLTDDVSKINEGIGDKIGMFFQSMATFFTGFIVGFTRGWKLTLVILAISPVLGLSAAVWAKILSSFTDKELLAYAKAGAVAEEVLAAIRTVIAFGGQKKELERYNKNLEEAKRIGIKKAITANISIGAAFLLIYASYALAFWYGTTLVLSGEYSIGQVLTVFFSVLIGAFSVGQASPSIEAFANARGAAYEIFKIIDNKPSIDSYSKSGHKPDNIKGNLEFRNVHFSYPSRKEVKILKGLNLKVQSGQTVALVGNSGCGKSTTVQLMQRLYDPTEGMVSVDGQDIRTINVRFLREIIGVVSQEPVLFATTIAENIRYGRENVTMDEIEKAVKEANAYDFIMKLPHKFDTLVGERGAQLSGGQKQRIAIARALVRNPKILLLDEATSALDTESEAVVQVALDKARKGRTTIVIAHRLSTVRNADVIAGFDDGVIVEKGNHDELMKEKGIYFKLVTMQTAGNEVELENAADESKSEIDALEMSSNDSRSSLIRKRSTRRSVRGSQAQDRKLSTKEALDESIPPVSFWRIMKLNLTEWPYFVVGVFCAIINGGLQPAFAIIFSKIIGVFTRIDDPETKRQNSNLFSLLFLALGIISFITFFLQGFTFGKAGEILTKRLRYMVFRSMLRQDVSWFDDPKNTTGALTTRLANDAAQVKGAIGSRLAVITQNIANLGTGIIISFIYGWQLTLLLLAIVPIIAIAGVVEMKMLSGQALKDKKELEGSGKIATEAIENFRTVVSLTQEQKFEHMYAQSLQVPYRNSLRKAHIFGITFSFTQAMMYFSYAGCFRFGAYLVAHKLMSFEDVLLVFSAVVFGAMAVGQVSSFAPDYAKAKISAAHIIMIIEKTPLIDSYSTEGLMPNTLEGNVTFGEVVFNYPTRPDIPVLQGLSLEVKKGQTLALVGSSGCGKSTVVQLLERFYDPLAGKVLLDGKEIKRLNVQWLRAHLGIVSQEPILFDCSIAENIAYGDNSRVVSQEEIVRAAKEANIHAFIESLPNKYSTKVGDKGTQLSGGQKQRIAIARALVRQPHILLLDEATSALDTESEKVVQEALDKAREGRTCIVIAHRLSTIQNADLIVVFQNGRVKEHGTHQQLLAQKGIYFSMVSVQAGTKRQ</sequence>
<keyword id="KW-0002">3D-structure</keyword>
<keyword id="KW-0025">Alternative splicing</keyword>
<keyword id="KW-0067">ATP-binding</keyword>
<keyword id="KW-1003">Cell membrane</keyword>
<keyword id="KW-0963">Cytoplasm</keyword>
<keyword id="KW-0225">Disease variant</keyword>
<keyword id="KW-0325">Glycoprotein</keyword>
<keyword id="KW-0445">Lipid transport</keyword>
<keyword id="KW-0472">Membrane</keyword>
<keyword id="KW-0547">Nucleotide-binding</keyword>
<keyword id="KW-0597">Phosphoprotein</keyword>
<keyword id="KW-1267">Proteomics identification</keyword>
<keyword id="KW-1185">Reference proteome</keyword>
<keyword id="KW-0677">Repeat</keyword>
<keyword id="KW-1278">Translocase</keyword>
<keyword id="KW-0812">Transmembrane</keyword>
<keyword id="KW-1133">Transmembrane helix</keyword>
<keyword id="KW-0813">Transport</keyword>
<dbReference type="EC" id="7.6.2.2" evidence="24 27"/>
<dbReference type="EC" id="7.6.2.1" evidence="26"/>
<dbReference type="EMBL" id="M14758">
    <property type="protein sequence ID" value="AAA59575.1"/>
    <property type="molecule type" value="mRNA"/>
</dbReference>
<dbReference type="EMBL" id="M29447">
    <property type="protein sequence ID" value="AAA59576.1"/>
    <property type="molecule type" value="Genomic_DNA"/>
</dbReference>
<dbReference type="EMBL" id="M29424">
    <property type="protein sequence ID" value="AAA59576.1"/>
    <property type="status" value="JOINED"/>
    <property type="molecule type" value="Genomic_DNA"/>
</dbReference>
<dbReference type="EMBL" id="M29425">
    <property type="protein sequence ID" value="AAA59576.1"/>
    <property type="status" value="JOINED"/>
    <property type="molecule type" value="Genomic_DNA"/>
</dbReference>
<dbReference type="EMBL" id="M29426">
    <property type="protein sequence ID" value="AAA59576.1"/>
    <property type="status" value="JOINED"/>
    <property type="molecule type" value="Genomic_DNA"/>
</dbReference>
<dbReference type="EMBL" id="M29427">
    <property type="protein sequence ID" value="AAA59576.1"/>
    <property type="status" value="JOINED"/>
    <property type="molecule type" value="Genomic_DNA"/>
</dbReference>
<dbReference type="EMBL" id="M29428">
    <property type="protein sequence ID" value="AAA59576.1"/>
    <property type="status" value="JOINED"/>
    <property type="molecule type" value="Genomic_DNA"/>
</dbReference>
<dbReference type="EMBL" id="M29429">
    <property type="protein sequence ID" value="AAA59576.1"/>
    <property type="status" value="JOINED"/>
    <property type="molecule type" value="Genomic_DNA"/>
</dbReference>
<dbReference type="EMBL" id="M29430">
    <property type="protein sequence ID" value="AAA59576.1"/>
    <property type="status" value="JOINED"/>
    <property type="molecule type" value="Genomic_DNA"/>
</dbReference>
<dbReference type="EMBL" id="M29431">
    <property type="protein sequence ID" value="AAA59576.1"/>
    <property type="status" value="JOINED"/>
    <property type="molecule type" value="Genomic_DNA"/>
</dbReference>
<dbReference type="EMBL" id="M29432">
    <property type="protein sequence ID" value="AAA59576.1"/>
    <property type="status" value="JOINED"/>
    <property type="molecule type" value="Genomic_DNA"/>
</dbReference>
<dbReference type="EMBL" id="M29433">
    <property type="protein sequence ID" value="AAA59576.1"/>
    <property type="status" value="JOINED"/>
    <property type="molecule type" value="Genomic_DNA"/>
</dbReference>
<dbReference type="EMBL" id="M29434">
    <property type="protein sequence ID" value="AAA59576.1"/>
    <property type="status" value="JOINED"/>
    <property type="molecule type" value="Genomic_DNA"/>
</dbReference>
<dbReference type="EMBL" id="M29435">
    <property type="protein sequence ID" value="AAA59576.1"/>
    <property type="status" value="JOINED"/>
    <property type="molecule type" value="Genomic_DNA"/>
</dbReference>
<dbReference type="EMBL" id="M29436">
    <property type="protein sequence ID" value="AAA59576.1"/>
    <property type="status" value="JOINED"/>
    <property type="molecule type" value="Genomic_DNA"/>
</dbReference>
<dbReference type="EMBL" id="M29437">
    <property type="protein sequence ID" value="AAA59576.1"/>
    <property type="status" value="JOINED"/>
    <property type="molecule type" value="Genomic_DNA"/>
</dbReference>
<dbReference type="EMBL" id="M29438">
    <property type="protein sequence ID" value="AAA59576.1"/>
    <property type="status" value="JOINED"/>
    <property type="molecule type" value="Genomic_DNA"/>
</dbReference>
<dbReference type="EMBL" id="M29439">
    <property type="protein sequence ID" value="AAA59576.1"/>
    <property type="status" value="JOINED"/>
    <property type="molecule type" value="Genomic_DNA"/>
</dbReference>
<dbReference type="EMBL" id="M29440">
    <property type="protein sequence ID" value="AAA59576.1"/>
    <property type="status" value="JOINED"/>
    <property type="molecule type" value="Genomic_DNA"/>
</dbReference>
<dbReference type="EMBL" id="M29441">
    <property type="protein sequence ID" value="AAA59576.1"/>
    <property type="status" value="JOINED"/>
    <property type="molecule type" value="Genomic_DNA"/>
</dbReference>
<dbReference type="EMBL" id="M29442">
    <property type="protein sequence ID" value="AAA59576.1"/>
    <property type="status" value="JOINED"/>
    <property type="molecule type" value="Genomic_DNA"/>
</dbReference>
<dbReference type="EMBL" id="M29443">
    <property type="protein sequence ID" value="AAA59576.1"/>
    <property type="status" value="JOINED"/>
    <property type="molecule type" value="Genomic_DNA"/>
</dbReference>
<dbReference type="EMBL" id="M29444">
    <property type="protein sequence ID" value="AAA59576.1"/>
    <property type="status" value="JOINED"/>
    <property type="molecule type" value="Genomic_DNA"/>
</dbReference>
<dbReference type="EMBL" id="M29445">
    <property type="protein sequence ID" value="AAA59576.1"/>
    <property type="status" value="JOINED"/>
    <property type="molecule type" value="Genomic_DNA"/>
</dbReference>
<dbReference type="EMBL" id="M29446">
    <property type="protein sequence ID" value="AAA59576.1"/>
    <property type="status" value="JOINED"/>
    <property type="molecule type" value="Genomic_DNA"/>
</dbReference>
<dbReference type="EMBL" id="AF016535">
    <property type="protein sequence ID" value="AAB69423.1"/>
    <property type="molecule type" value="mRNA"/>
</dbReference>
<dbReference type="EMBL" id="EU854148">
    <property type="protein sequence ID" value="ACF94688.1"/>
    <property type="molecule type" value="mRNA"/>
</dbReference>
<dbReference type="EMBL" id="AY910577">
    <property type="protein sequence ID" value="AAW82430.1"/>
    <property type="molecule type" value="Genomic_DNA"/>
</dbReference>
<dbReference type="EMBL" id="AK290159">
    <property type="protein sequence ID" value="BAF82848.1"/>
    <property type="molecule type" value="mRNA"/>
</dbReference>
<dbReference type="EMBL" id="AC002457">
    <property type="protein sequence ID" value="AAM49149.1"/>
    <property type="status" value="ALT_SEQ"/>
    <property type="molecule type" value="Genomic_DNA"/>
</dbReference>
<dbReference type="EMBL" id="AC005068">
    <property type="status" value="NOT_ANNOTATED_CDS"/>
    <property type="molecule type" value="Genomic_DNA"/>
</dbReference>
<dbReference type="EMBL" id="M37724">
    <property type="protein sequence ID" value="AAA88047.1"/>
    <property type="molecule type" value="Genomic_DNA"/>
</dbReference>
<dbReference type="EMBL" id="M37725">
    <property type="protein sequence ID" value="AAA88048.1"/>
    <property type="molecule type" value="Genomic_DNA"/>
</dbReference>
<dbReference type="EMBL" id="X58723">
    <property type="protein sequence ID" value="CAA41558.1"/>
    <property type="molecule type" value="Genomic_DNA"/>
</dbReference>
<dbReference type="CCDS" id="CCDS5608.1">
    <molecule id="P08183-1"/>
</dbReference>
<dbReference type="PIR" id="A34914">
    <property type="entry name" value="DVHU1"/>
</dbReference>
<dbReference type="RefSeq" id="NP_000918.2">
    <molecule id="P08183-1"/>
    <property type="nucleotide sequence ID" value="NM_000927.4"/>
</dbReference>
<dbReference type="RefSeq" id="NP_001335873.1">
    <molecule id="P08183-1"/>
    <property type="nucleotide sequence ID" value="NM_001348944.2"/>
</dbReference>
<dbReference type="RefSeq" id="NP_001335875.1">
    <molecule id="P08183-1"/>
    <property type="nucleotide sequence ID" value="NM_001348946.2"/>
</dbReference>
<dbReference type="PDB" id="6C0V">
    <property type="method" value="EM"/>
    <property type="resolution" value="3.40 A"/>
    <property type="chains" value="A=1-1280"/>
</dbReference>
<dbReference type="PDB" id="6FN1">
    <property type="method" value="EM"/>
    <property type="resolution" value="3.58 A"/>
    <property type="chains" value="A=32-1279"/>
</dbReference>
<dbReference type="PDB" id="6FN4">
    <property type="method" value="EM"/>
    <property type="resolution" value="4.14 A"/>
    <property type="chains" value="A=1-1279"/>
</dbReference>
<dbReference type="PDB" id="6QEX">
    <property type="method" value="EM"/>
    <property type="resolution" value="3.60 A"/>
    <property type="chains" value="A=1-1280"/>
</dbReference>
<dbReference type="PDB" id="7A65">
    <property type="method" value="EM"/>
    <property type="resolution" value="3.90 A"/>
    <property type="chains" value="A=1-1280"/>
</dbReference>
<dbReference type="PDB" id="7A69">
    <property type="method" value="EM"/>
    <property type="resolution" value="3.20 A"/>
    <property type="chains" value="A=1-1280"/>
</dbReference>
<dbReference type="PDB" id="7A6C">
    <property type="method" value="EM"/>
    <property type="resolution" value="3.60 A"/>
    <property type="chains" value="A=1-1280"/>
</dbReference>
<dbReference type="PDB" id="7A6E">
    <property type="method" value="EM"/>
    <property type="resolution" value="3.60 A"/>
    <property type="chains" value="A=1-1280"/>
</dbReference>
<dbReference type="PDB" id="7A6F">
    <property type="method" value="EM"/>
    <property type="resolution" value="3.50 A"/>
    <property type="chains" value="A=1-1280"/>
</dbReference>
<dbReference type="PDB" id="7O9W">
    <property type="method" value="EM"/>
    <property type="resolution" value="3.50 A"/>
    <property type="chains" value="A=1-1280"/>
</dbReference>
<dbReference type="PDB" id="8Y6H">
    <property type="method" value="EM"/>
    <property type="resolution" value="2.49 A"/>
    <property type="chains" value="A=1-1280"/>
</dbReference>
<dbReference type="PDB" id="8Y6I">
    <property type="method" value="EM"/>
    <property type="resolution" value="2.54 A"/>
    <property type="chains" value="A=1-1280"/>
</dbReference>
<dbReference type="PDB" id="9CR8">
    <property type="method" value="EM"/>
    <property type="resolution" value="3.80 A"/>
    <property type="chains" value="A=1-1280"/>
</dbReference>
<dbReference type="PDB" id="9CTC">
    <property type="method" value="EM"/>
    <property type="resolution" value="3.60 A"/>
    <property type="chains" value="A=1-1280"/>
</dbReference>
<dbReference type="PDB" id="9CTF">
    <property type="method" value="EM"/>
    <property type="resolution" value="3.90 A"/>
    <property type="chains" value="A=1-1280"/>
</dbReference>
<dbReference type="PDB" id="9CTG">
    <property type="method" value="EM"/>
    <property type="resolution" value="3.40 A"/>
    <property type="chains" value="A=1-1280"/>
</dbReference>
<dbReference type="PDBsum" id="6C0V"/>
<dbReference type="PDBsum" id="6FN1"/>
<dbReference type="PDBsum" id="6FN4"/>
<dbReference type="PDBsum" id="6QEX"/>
<dbReference type="PDBsum" id="7A65"/>
<dbReference type="PDBsum" id="7A69"/>
<dbReference type="PDBsum" id="7A6C"/>
<dbReference type="PDBsum" id="7A6E"/>
<dbReference type="PDBsum" id="7A6F"/>
<dbReference type="PDBsum" id="7O9W"/>
<dbReference type="PDBsum" id="8Y6H"/>
<dbReference type="PDBsum" id="8Y6I"/>
<dbReference type="PDBsum" id="9CR8"/>
<dbReference type="PDBsum" id="9CTC"/>
<dbReference type="PDBsum" id="9CTF"/>
<dbReference type="PDBsum" id="9CTG"/>
<dbReference type="EMDB" id="EMD-11666"/>
<dbReference type="EMDB" id="EMD-11667"/>
<dbReference type="EMDB" id="EMD-11670"/>
<dbReference type="EMDB" id="EMD-11671"/>
<dbReference type="EMDB" id="EMD-11672"/>
<dbReference type="EMDB" id="EMD-12765"/>
<dbReference type="EMDB" id="EMD-3421"/>
<dbReference type="EMDB" id="EMD-3422"/>
<dbReference type="EMDB" id="EMD-3423"/>
<dbReference type="EMDB" id="EMD-3424"/>
<dbReference type="EMDB" id="EMD-3425"/>
<dbReference type="EMDB" id="EMD-3426"/>
<dbReference type="EMDB" id="EMD-3427"/>
<dbReference type="EMDB" id="EMD-3428"/>
<dbReference type="EMDB" id="EMD-3429"/>
<dbReference type="EMDB" id="EMD-3430"/>
<dbReference type="EMDB" id="EMD-4281"/>
<dbReference type="EMDB" id="EMD-4282"/>
<dbReference type="EMDB" id="EMD-4539"/>
<dbReference type="EMDB" id="EMD-45854"/>
<dbReference type="EMDB" id="EMD-45903"/>
<dbReference type="EMDB" id="EMD-45904"/>
<dbReference type="EMDB" id="EMD-45906"/>
<dbReference type="EMDB" id="EMD-45931"/>
<dbReference type="EMDB" id="EMD-45932"/>
<dbReference type="EMDB" id="EMD-7325"/>
<dbReference type="SMR" id="P08183"/>
<dbReference type="BioGRID" id="111262">
    <property type="interactions" value="54"/>
</dbReference>
<dbReference type="CORUM" id="P08183"/>
<dbReference type="FunCoup" id="P08183">
    <property type="interactions" value="164"/>
</dbReference>
<dbReference type="IntAct" id="P08183">
    <property type="interactions" value="23"/>
</dbReference>
<dbReference type="MINT" id="P08183"/>
<dbReference type="STRING" id="9606.ENSP00000478255"/>
<dbReference type="BindingDB" id="P08183"/>
<dbReference type="ChEMBL" id="CHEMBL4302"/>
<dbReference type="DrugBank" id="DB12001">
    <property type="generic name" value="Abemaciclib"/>
</dbReference>
<dbReference type="DrugBank" id="DB14973">
    <property type="generic name" value="Abrocitinib"/>
</dbReference>
<dbReference type="DrugBank" id="DB01193">
    <property type="generic name" value="Acebutolol"/>
</dbReference>
<dbReference type="DrugBank" id="DB01418">
    <property type="generic name" value="Acenocoumarol"/>
</dbReference>
<dbReference type="DrugBank" id="DB00316">
    <property type="generic name" value="Acetaminophen"/>
</dbReference>
<dbReference type="DrugBank" id="DB00945">
    <property type="generic name" value="Acetylsalicylic acid"/>
</dbReference>
<dbReference type="DrugBank" id="DB15568">
    <property type="generic name" value="Adagrasib"/>
</dbReference>
<dbReference type="DrugBank" id="DB08916">
    <property type="generic name" value="Afatinib"/>
</dbReference>
<dbReference type="DrugBank" id="DB00518">
    <property type="generic name" value="Albendazole"/>
</dbReference>
<dbReference type="DrugBank" id="DB04630">
    <property type="generic name" value="Aldosterone"/>
</dbReference>
<dbReference type="DrugBank" id="DB11363">
    <property type="generic name" value="Alectinib"/>
</dbReference>
<dbReference type="DrugBank" id="DB00802">
    <property type="generic name" value="Alfentanil"/>
</dbReference>
<dbReference type="DrugBank" id="DB00346">
    <property type="generic name" value="Alfuzosin"/>
</dbReference>
<dbReference type="DrugBank" id="DB09026">
    <property type="generic name" value="Aliskiren"/>
</dbReference>
<dbReference type="DrugBank" id="DB00523">
    <property type="generic name" value="Alitretinoin"/>
</dbReference>
<dbReference type="DrugBank" id="DB12015">
    <property type="generic name" value="Alpelisib"/>
</dbReference>
<dbReference type="DrugBank" id="DB14003">
    <property type="generic name" value="alpha-Tocopherol acetate"/>
</dbReference>
<dbReference type="DrugBank" id="DB06403">
    <property type="generic name" value="Ambrisentan"/>
</dbReference>
<dbReference type="DrugBank" id="DB01118">
    <property type="generic name" value="Amiodarone"/>
</dbReference>
<dbReference type="DrugBank" id="DB06288">
    <property type="generic name" value="Amisulpride"/>
</dbReference>
<dbReference type="DrugBank" id="DB00321">
    <property type="generic name" value="Amitriptyline"/>
</dbReference>
<dbReference type="DrugBank" id="DB00381">
    <property type="generic name" value="Amlodipine"/>
</dbReference>
<dbReference type="DrugBank" id="DB00613">
    <property type="generic name" value="Amodiaquine"/>
</dbReference>
<dbReference type="DrugBank" id="DB00701">
    <property type="generic name" value="Amprenavir"/>
</dbReference>
<dbReference type="DrugBank" id="DB00276">
    <property type="generic name" value="Amsacrine"/>
</dbReference>
<dbReference type="DrugBank" id="DB01217">
    <property type="generic name" value="Anastrozole"/>
</dbReference>
<dbReference type="DrugBank" id="DB06420">
    <property type="generic name" value="Annamycin"/>
</dbReference>
<dbReference type="DrugBank" id="DB11901">
    <property type="generic name" value="Apalutamide"/>
</dbReference>
<dbReference type="DrugBank" id="DB06605">
    <property type="generic name" value="Apixaban"/>
</dbReference>
<dbReference type="DrugBank" id="DB05676">
    <property type="generic name" value="Apremilast"/>
</dbReference>
<dbReference type="DrugBank" id="DB15059">
    <property type="generic name" value="Aprocitentan"/>
</dbReference>
<dbReference type="DrugBank" id="DB01238">
    <property type="generic name" value="Aripiprazole"/>
</dbReference>
<dbReference type="DrugBank" id="DB01169">
    <property type="generic name" value="Arsenic trioxide"/>
</dbReference>
<dbReference type="DrugBank" id="DB09274">
    <property type="generic name" value="Artesunate"/>
</dbReference>
<dbReference type="DrugBank" id="DB12597">
    <property type="generic name" value="Asciminib"/>
</dbReference>
<dbReference type="DrugBank" id="DB00637">
    <property type="generic name" value="Astemizole"/>
</dbReference>
<dbReference type="DrugBank" id="DB11586">
    <property type="generic name" value="Asunaprevir"/>
</dbReference>
<dbReference type="DrugBank" id="DB01072">
    <property type="generic name" value="Atazanavir"/>
</dbReference>
<dbReference type="DrugBank" id="DB16098">
    <property type="generic name" value="Atogepant"/>
</dbReference>
<dbReference type="DrugBank" id="DB01076">
    <property type="generic name" value="Atorvastatin"/>
</dbReference>
<dbReference type="DrugBank" id="DB01117">
    <property type="generic name" value="Atovaquone"/>
</dbReference>
<dbReference type="DrugBank" id="DB00171">
    <property type="generic name" value="ATP"/>
</dbReference>
<dbReference type="DrugBank" id="DB15011">
    <property type="generic name" value="Avacopan"/>
</dbReference>
<dbReference type="DrugBank" id="DB06237">
    <property type="generic name" value="Avanafil"/>
</dbReference>
<dbReference type="DrugBank" id="DB15233">
    <property type="generic name" value="Avapritinib"/>
</dbReference>
<dbReference type="DrugBank" id="DB11995">
    <property type="generic name" value="Avatrombopag"/>
</dbReference>
<dbReference type="DrugBank" id="DB06626">
    <property type="generic name" value="Axitinib"/>
</dbReference>
<dbReference type="DrugBank" id="DB00993">
    <property type="generic name" value="Azathioprine"/>
</dbReference>
<dbReference type="DrugBank" id="DB00972">
    <property type="generic name" value="Azelastine"/>
</dbReference>
<dbReference type="DrugBank" id="DB08822">
    <property type="generic name" value="Azilsartan medoxomil"/>
</dbReference>
<dbReference type="DrugBank" id="DB00207">
    <property type="generic name" value="Azithromycin"/>
</dbReference>
<dbReference type="DrugBank" id="DB16407">
    <property type="generic name" value="Azvudine"/>
</dbReference>
<dbReference type="DrugBank" id="DB13997">
    <property type="generic name" value="Baloxavir marboxil"/>
</dbReference>
<dbReference type="DrugBank" id="DB11817">
    <property type="generic name" value="Baricitinib"/>
</dbReference>
<dbReference type="DrugBank" id="DB00394">
    <property type="generic name" value="Beclomethasone dipropionate"/>
</dbReference>
<dbReference type="DrugBank" id="DB15719">
    <property type="generic name" value="Belantamab mafodotin"/>
</dbReference>
<dbReference type="DrugBank" id="DB05015">
    <property type="generic name" value="Belinostat"/>
</dbReference>
<dbReference type="DrugBank" id="DB16703">
    <property type="generic name" value="Belumosudil"/>
</dbReference>
<dbReference type="DrugBank" id="DB15463">
    <property type="generic name" value="Belzutifan"/>
</dbReference>
<dbReference type="DrugBank" id="DB19353">
    <property type="generic name" value="Benzgalantamine"/>
</dbReference>
<dbReference type="DrugBank" id="DB01086">
    <property type="generic name" value="Benzocaine"/>
</dbReference>
<dbReference type="DrugBank" id="DB01244">
    <property type="generic name" value="Bepridil"/>
</dbReference>
<dbReference type="DrugBank" id="DB15982">
    <property type="generic name" value="Berotralstat"/>
</dbReference>
<dbReference type="DrugBank" id="DB00443">
    <property type="generic name" value="Betamethasone"/>
</dbReference>
<dbReference type="DrugBank" id="DB14669">
    <property type="generic name" value="Betamethasone phosphate"/>
</dbReference>
<dbReference type="DrugBank" id="DB12364">
    <property type="generic name" value="Betrixaban"/>
</dbReference>
<dbReference type="DrugBank" id="DB12236">
    <property type="generic name" value="Bexagliflozin"/>
</dbReference>
<dbReference type="DrugBank" id="DB01128">
    <property type="generic name" value="Bicalutamide"/>
</dbReference>
<dbReference type="DrugBank" id="DB11967">
    <property type="generic name" value="Binimetinib"/>
</dbReference>
<dbReference type="DrugBank" id="DB04851">
    <property type="generic name" value="Biricodar"/>
</dbReference>
<dbReference type="DrugBank" id="DB00612">
    <property type="generic name" value="Bisoprolol"/>
</dbReference>
<dbReference type="DrugBank" id="DB08873">
    <property type="generic name" value="Boceprevir"/>
</dbReference>
<dbReference type="DrugBank" id="DB00188">
    <property type="generic name" value="Bortezomib"/>
</dbReference>
<dbReference type="DrugBank" id="DB06616">
    <property type="generic name" value="Bosutinib"/>
</dbReference>
<dbReference type="DrugBank" id="DB01200">
    <property type="generic name" value="Bromocriptine"/>
</dbReference>
<dbReference type="DrugBank" id="DB01222">
    <property type="generic name" value="Budesonide"/>
</dbReference>
<dbReference type="DrugBank" id="DB00921">
    <property type="generic name" value="Buprenorphine"/>
</dbReference>
<dbReference type="DrugBank" id="DB00490">
    <property type="generic name" value="Buspirone"/>
</dbReference>
<dbReference type="DrugBank" id="DB06772">
    <property type="generic name" value="Cabazitaxel"/>
</dbReference>
<dbReference type="DrugBank" id="DB00248">
    <property type="generic name" value="Cabergoline"/>
</dbReference>
<dbReference type="DrugBank" id="DB11751">
    <property type="generic name" value="Cabotegravir"/>
</dbReference>
<dbReference type="DrugBank" id="DB04690">
    <property type="generic name" value="Camptothecin"/>
</dbReference>
<dbReference type="DrugBank" id="DB08907">
    <property type="generic name" value="Canagliflozin"/>
</dbReference>
<dbReference type="DrugBank" id="DB13919">
    <property type="generic name" value="Candesartan"/>
</dbReference>
<dbReference type="DrugBank" id="DB00796">
    <property type="generic name" value="Candesartan cilexetil"/>
</dbReference>
<dbReference type="DrugBank" id="DB09061">
    <property type="generic name" value="Cannabidiol"/>
</dbReference>
<dbReference type="DrugBank" id="DB14737">
    <property type="generic name" value="Cannabinol"/>
</dbReference>
<dbReference type="DrugBank" id="DB11791">
    <property type="generic name" value="Capmatinib"/>
</dbReference>
<dbReference type="DrugBank" id="DB01197">
    <property type="generic name" value="Captopril"/>
</dbReference>
<dbReference type="DrugBank" id="DB00564">
    <property type="generic name" value="Carbamazepine"/>
</dbReference>
<dbReference type="DrugBank" id="DB08889">
    <property type="generic name" value="Carfilzomib"/>
</dbReference>
<dbReference type="DrugBank" id="DB06016">
    <property type="generic name" value="Cariprazine"/>
</dbReference>
<dbReference type="DrugBank" id="DB01136">
    <property type="generic name" value="Carvedilol"/>
</dbReference>
<dbReference type="DrugBank" id="DB00520">
    <property type="generic name" value="Caspofungin"/>
</dbReference>
<dbReference type="DrugBank" id="DB01212">
    <property type="generic name" value="Ceftriaxone"/>
</dbReference>
<dbReference type="DrugBank" id="DB00482">
    <property type="generic name" value="Celecoxib"/>
</dbReference>
<dbReference type="DrugBank" id="DB09063">
    <property type="generic name" value="Ceritinib"/>
</dbReference>
<dbReference type="DrugBank" id="DB00439">
    <property type="generic name" value="Cerivastatin"/>
</dbReference>
<dbReference type="DrugBank" id="DB06419">
    <property type="generic name" value="Cethromycin"/>
</dbReference>
<dbReference type="DrugBank" id="DB00341">
    <property type="generic name" value="Cetirizine"/>
</dbReference>
<dbReference type="DrugBank" id="DB07565">
    <property type="generic name" value="Chloramphenicol succinate"/>
</dbReference>
<dbReference type="DrugBank" id="DB00608">
    <property type="generic name" value="Chloroquine"/>
</dbReference>
<dbReference type="DrugBank" id="DB00477">
    <property type="generic name" value="Chlorpromazine"/>
</dbReference>
<dbReference type="DrugBank" id="DB01239">
    <property type="generic name" value="Chlorprothixene"/>
</dbReference>
<dbReference type="DrugBank" id="DB04540">
    <property type="generic name" value="Cholesterol"/>
</dbReference>
<dbReference type="DrugBank" id="DB02659">
    <property type="generic name" value="Cholic Acid"/>
</dbReference>
<dbReference type="DrugBank" id="DB01340">
    <property type="generic name" value="Cilazapril"/>
</dbReference>
<dbReference type="DrugBank" id="DB00501">
    <property type="generic name" value="Cimetidine"/>
</dbReference>
<dbReference type="DrugBank" id="DB00537">
    <property type="generic name" value="Ciprofloxacin"/>
</dbReference>
<dbReference type="DrugBank" id="DB00215">
    <property type="generic name" value="Citalopram"/>
</dbReference>
<dbReference type="DrugBank" id="DB00242">
    <property type="generic name" value="Cladribine"/>
</dbReference>
<dbReference type="DrugBank" id="DB01211">
    <property type="generic name" value="Clarithromycin"/>
</dbReference>
<dbReference type="DrugBank" id="DB01190">
    <property type="generic name" value="Clindamycin"/>
</dbReference>
<dbReference type="DrugBank" id="DB00349">
    <property type="generic name" value="Clobazam"/>
</dbReference>
<dbReference type="DrugBank" id="DB00845">
    <property type="generic name" value="Clofazimine"/>
</dbReference>
<dbReference type="DrugBank" id="DB00882">
    <property type="generic name" value="Clomifene"/>
</dbReference>
<dbReference type="DrugBank" id="DB01242">
    <property type="generic name" value="Clomipramine"/>
</dbReference>
<dbReference type="DrugBank" id="DB00758">
    <property type="generic name" value="Clopidogrel"/>
</dbReference>
<dbReference type="DrugBank" id="DB00257">
    <property type="generic name" value="Clotrimazole"/>
</dbReference>
<dbReference type="DrugBank" id="DB00363">
    <property type="generic name" value="Clozapine"/>
</dbReference>
<dbReference type="DrugBank" id="DB09065">
    <property type="generic name" value="Cobicistat"/>
</dbReference>
<dbReference type="DrugBank" id="DB05239">
    <property type="generic name" value="Cobimetinib"/>
</dbReference>
<dbReference type="DrugBank" id="DB01394">
    <property type="generic name" value="Colchicine"/>
</dbReference>
<dbReference type="DrugBank" id="DB02587">
    <property type="generic name" value="Colforsin"/>
</dbReference>
<dbReference type="DrugBank" id="DB14062">
    <property type="generic name" value="Concanamycin A"/>
</dbReference>
<dbReference type="DrugBank" id="DB00872">
    <property type="generic name" value="Conivaptan"/>
</dbReference>
<dbReference type="DrugBank" id="DB00286">
    <property type="generic name" value="Conjugated estrogens"/>
</dbReference>
<dbReference type="DrugBank" id="DB12483">
    <property type="generic name" value="Copanlisib"/>
</dbReference>
<dbReference type="DrugBank" id="DB01380">
    <property type="generic name" value="Cortisone acetate"/>
</dbReference>
<dbReference type="DrugBank" id="DB08865">
    <property type="generic name" value="Crizotinib"/>
</dbReference>
<dbReference type="DrugBank" id="DB11672">
    <property type="generic name" value="Curcumin"/>
</dbReference>
<dbReference type="DrugBank" id="DB14635">
    <property type="generic name" value="Curcumin sulfate"/>
</dbReference>
<dbReference type="DrugBank" id="DB00091">
    <property type="generic name" value="Cyclosporine"/>
</dbReference>
<dbReference type="DrugBank" id="DB06695">
    <property type="generic name" value="Dabigatran etexilate"/>
</dbReference>
<dbReference type="DrugBank" id="DB08912">
    <property type="generic name" value="Dabrafenib"/>
</dbReference>
<dbReference type="DrugBank" id="DB09102">
    <property type="generic name" value="Daclatasvir"/>
</dbReference>
<dbReference type="DrugBank" id="DB11963">
    <property type="generic name" value="Dacomitinib"/>
</dbReference>
<dbReference type="DrugBank" id="DB00970">
    <property type="generic name" value="Dactinomycin"/>
</dbReference>
<dbReference type="DrugBank" id="DB15401">
    <property type="generic name" value="Danicopan"/>
</dbReference>
<dbReference type="DrugBank" id="DB06292">
    <property type="generic name" value="Dapagliflozin"/>
</dbReference>
<dbReference type="DrugBank" id="DB00080">
    <property type="generic name" value="Daptomycin"/>
</dbReference>
<dbReference type="DrugBank" id="DB12941">
    <property type="generic name" value="Darolutamide"/>
</dbReference>
<dbReference type="DrugBank" id="DB01264">
    <property type="generic name" value="Darunavir"/>
</dbReference>
<dbReference type="DrugBank" id="DB09183">
    <property type="generic name" value="Dasabuvir"/>
</dbReference>
<dbReference type="DrugBank" id="DB01254">
    <property type="generic name" value="Dasatinib"/>
</dbReference>
<dbReference type="DrugBank" id="DB00694">
    <property type="generic name" value="Daunorubicin"/>
</dbReference>
<dbReference type="DrugBank" id="DB04840">
    <property type="generic name" value="Debrisoquine"/>
</dbReference>
<dbReference type="DrugBank" id="DB16133">
    <property type="generic name" value="Delgocitinib"/>
</dbReference>
<dbReference type="DrugBank" id="DB01151">
    <property type="generic name" value="Desipramine"/>
</dbReference>
<dbReference type="DrugBank" id="DB00967">
    <property type="generic name" value="Desloratadine"/>
</dbReference>
<dbReference type="DrugBank" id="DB14071">
    <property type="generic name" value="Desmethylsertraline"/>
</dbReference>
<dbReference type="DrugBank" id="DB16650">
    <property type="generic name" value="Deucravacitinib"/>
</dbReference>
<dbReference type="DrugBank" id="DB18847">
    <property type="generic name" value="Deuruxolitinib"/>
</dbReference>
<dbReference type="DrugBank" id="DB01234">
    <property type="generic name" value="Dexamethasone"/>
</dbReference>
<dbReference type="DrugBank" id="DB14649">
    <property type="generic name" value="Dexamethasone acetate"/>
</dbReference>
<dbReference type="DrugBank" id="DB09213">
    <property type="generic name" value="Dexibuprofen"/>
</dbReference>
<dbReference type="DrugBank" id="DB14068">
    <property type="generic name" value="Dexniguldipine"/>
</dbReference>
<dbReference type="DrugBank" id="DB14063">
    <property type="generic name" value="Dexverapamil"/>
</dbReference>
<dbReference type="DrugBank" id="DB00829">
    <property type="generic name" value="Diazepam"/>
</dbReference>
<dbReference type="DrugBank" id="DB00586">
    <property type="generic name" value="Diclofenac"/>
</dbReference>
<dbReference type="DrugBank" id="DB00255">
    <property type="generic name" value="Diethylstilbestrol"/>
</dbReference>
<dbReference type="DrugBank" id="DB01396">
    <property type="generic name" value="Digitoxin"/>
</dbReference>
<dbReference type="DrugBank" id="DB00390">
    <property type="generic name" value="Digoxin"/>
</dbReference>
<dbReference type="DrugBank" id="DB00320">
    <property type="generic name" value="Dihydroergotamine"/>
</dbReference>
<dbReference type="DrugBank" id="DB00343">
    <property type="generic name" value="Diltiazem"/>
</dbReference>
<dbReference type="DrugBank" id="DB08995">
    <property type="generic name" value="Diosmin"/>
</dbReference>
<dbReference type="DrugBank" id="DB00975">
    <property type="generic name" value="Dipyridamole"/>
</dbReference>
<dbReference type="DrugBank" id="DB01248">
    <property type="generic name" value="Docetaxel"/>
</dbReference>
<dbReference type="DrugBank" id="DB14067">
    <property type="generic name" value="Dofequidar"/>
</dbReference>
<dbReference type="DrugBank" id="DB08930">
    <property type="generic name" value="Dolutegravir"/>
</dbReference>
<dbReference type="DrugBank" id="DB01184">
    <property type="generic name" value="Domperidone"/>
</dbReference>
<dbReference type="DrugBank" id="DB05928">
    <property type="generic name" value="Dovitinib"/>
</dbReference>
<dbReference type="DrugBank" id="DB00590">
    <property type="generic name" value="Doxazosin"/>
</dbReference>
<dbReference type="DrugBank" id="DB01142">
    <property type="generic name" value="Doxepin"/>
</dbReference>
<dbReference type="DrugBank" id="DB00997">
    <property type="generic name" value="Doxorubicin"/>
</dbReference>
<dbReference type="DrugBank" id="DB00470">
    <property type="generic name" value="Dronabinol"/>
</dbReference>
<dbReference type="DrugBank" id="DB04855">
    <property type="generic name" value="Dronedarone"/>
</dbReference>
<dbReference type="DrugBank" id="DB00476">
    <property type="generic name" value="Duloxetine"/>
</dbReference>
<dbReference type="DrugBank" id="DB11952">
    <property type="generic name" value="Duvelisib"/>
</dbReference>
<dbReference type="DrugBank" id="DB09075">
    <property type="generic name" value="Edoxaban"/>
</dbReference>
<dbReference type="DrugBank" id="DB06374">
    <property type="generic name" value="Elacestrant"/>
</dbReference>
<dbReference type="DrugBank" id="DB04881">
    <property type="generic name" value="Elacridar"/>
</dbReference>
<dbReference type="DrugBank" id="DB11979">
    <property type="generic name" value="Elagolix"/>
</dbReference>
<dbReference type="DrugBank" id="DB11574">
    <property type="generic name" value="Elbasvir"/>
</dbReference>
<dbReference type="DrugBank" id="DB00216">
    <property type="generic name" value="Eletriptan"/>
</dbReference>
<dbReference type="DrugBank" id="DB15444">
    <property type="generic name" value="Elexacaftor"/>
</dbReference>
<dbReference type="DrugBank" id="DB09039">
    <property type="generic name" value="Eliglustat"/>
</dbReference>
<dbReference type="DrugBank" id="DB14064">
    <property type="generic name" value="Emopamil"/>
</dbReference>
<dbReference type="DrugBank" id="DB09038">
    <property type="generic name" value="Empagliflozin"/>
</dbReference>
<dbReference type="DrugBank" id="DB00584">
    <property type="generic name" value="Enalapril"/>
</dbReference>
<dbReference type="DrugBank" id="DB13874">
    <property type="generic name" value="Enasidenib"/>
</dbReference>
<dbReference type="DrugBank" id="DB11718">
    <property type="generic name" value="Encorafenib"/>
</dbReference>
<dbReference type="DrugBank" id="DB13007">
    <property type="generic name" value="Enfortumab vedotin"/>
</dbReference>
<dbReference type="DrugBank" id="DB11986">
    <property type="generic name" value="Entrectinib"/>
</dbReference>
<dbReference type="DrugBank" id="DB08899">
    <property type="generic name" value="Enzalutamide"/>
</dbReference>
<dbReference type="DrugBank" id="DB00751">
    <property type="generic name" value="Epinastine"/>
</dbReference>
<dbReference type="DrugBank" id="DB12147">
    <property type="generic name" value="Erdafitinib"/>
</dbReference>
<dbReference type="DrugBank" id="DB01253">
    <property type="generic name" value="Ergometrine"/>
</dbReference>
<dbReference type="DrugBank" id="DB00696">
    <property type="generic name" value="Ergotamine"/>
</dbReference>
<dbReference type="DrugBank" id="DB00530">
    <property type="generic name" value="Erlotinib"/>
</dbReference>
<dbReference type="DrugBank" id="DB11827">
    <property type="generic name" value="Ertugliflozin"/>
</dbReference>
<dbReference type="DrugBank" id="DB00199">
    <property type="generic name" value="Erythromycin"/>
</dbReference>
<dbReference type="DrugBank" id="DB01175">
    <property type="generic name" value="Escitalopram"/>
</dbReference>
<dbReference type="DrugBank" id="DB00736">
    <property type="generic name" value="Esomeprazole"/>
</dbReference>
<dbReference type="DrugBank" id="DB00783">
    <property type="generic name" value="Estradiol"/>
</dbReference>
<dbReference type="DrugBank" id="DB13952">
    <property type="generic name" value="Estradiol acetate"/>
</dbReference>
<dbReference type="DrugBank" id="DB13953">
    <property type="generic name" value="Estradiol benzoate"/>
</dbReference>
<dbReference type="DrugBank" id="DB13954">
    <property type="generic name" value="Estradiol cypionate"/>
</dbReference>
<dbReference type="DrugBank" id="DB13955">
    <property type="generic name" value="Estradiol dienanthate"/>
</dbReference>
<dbReference type="DrugBank" id="DB13956">
    <property type="generic name" value="Estradiol valerate"/>
</dbReference>
<dbReference type="DrugBank" id="DB01196">
    <property type="generic name" value="Estramustine"/>
</dbReference>
<dbReference type="DrugBank" id="DB04573">
    <property type="generic name" value="Estriol"/>
</dbReference>
<dbReference type="DrugBank" id="DB14641">
    <property type="generic name" value="Estriol tripropionate"/>
</dbReference>
<dbReference type="DrugBank" id="DB00655">
    <property type="generic name" value="Estrone"/>
</dbReference>
<dbReference type="DrugBank" id="DB00977">
    <property type="generic name" value="Ethinylestradiol"/>
</dbReference>
<dbReference type="DrugBank" id="DB00773">
    <property type="generic name" value="Etoposide"/>
</dbReference>
<dbReference type="DrugBank" id="DB06414">
    <property type="generic name" value="Etravirine"/>
</dbReference>
<dbReference type="DrugBank" id="DB01590">
    <property type="generic name" value="Everolimus"/>
</dbReference>
<dbReference type="DrugBank" id="DB00973">
    <property type="generic name" value="Ezetimibe"/>
</dbReference>
<dbReference type="DrugBank" id="DB12466">
    <property type="generic name" value="Favipiravir"/>
</dbReference>
<dbReference type="DrugBank" id="DB12500">
    <property type="generic name" value="Fedratinib"/>
</dbReference>
<dbReference type="DrugBank" id="DB01023">
    <property type="generic name" value="Felodipine"/>
</dbReference>
<dbReference type="DrugBank" id="DB00813">
    <property type="generic name" value="Fentanyl"/>
</dbReference>
<dbReference type="DrugBank" id="DB06702">
    <property type="generic name" value="Fesoterodine"/>
</dbReference>
<dbReference type="DrugBank" id="DB00950">
    <property type="generic name" value="Fexofenadine"/>
</dbReference>
<dbReference type="DrugBank" id="DB08874">
    <property type="generic name" value="Fidaxomicin"/>
</dbReference>
<dbReference type="DrugBank" id="DB14845">
    <property type="generic name" value="Filgotinib"/>
</dbReference>
<dbReference type="DrugBank" id="DB08868">
    <property type="generic name" value="Fingolimod"/>
</dbReference>
<dbReference type="DrugBank" id="DB01195">
    <property type="generic name" value="Flecainide"/>
</dbReference>
<dbReference type="DrugBank" id="DB04908">
    <property type="generic name" value="Flibanserin"/>
</dbReference>
<dbReference type="DrugBank" id="DB00196">
    <property type="generic name" value="Fluconazole"/>
</dbReference>
<dbReference type="DrugBank" id="DB00472">
    <property type="generic name" value="Fluoxetine"/>
</dbReference>
<dbReference type="DrugBank" id="DB00875">
    <property type="generic name" value="Flupentixol"/>
</dbReference>
<dbReference type="DrugBank" id="DB00623">
    <property type="generic name" value="Fluphenazine"/>
</dbReference>
<dbReference type="DrugBank" id="DB00690">
    <property type="generic name" value="Flurazepam"/>
</dbReference>
<dbReference type="DrugBank" id="DB13867">
    <property type="generic name" value="Fluticasone"/>
</dbReference>
<dbReference type="DrugBank" id="DB08906">
    <property type="generic name" value="Fluticasone furoate"/>
</dbReference>
<dbReference type="DrugBank" id="DB00588">
    <property type="generic name" value="Fluticasone propionate"/>
</dbReference>
<dbReference type="DrugBank" id="DB00176">
    <property type="generic name" value="Fluvoxamine"/>
</dbReference>
<dbReference type="DrugBank" id="DB05449">
    <property type="generic name" value="FM-VP4"/>
</dbReference>
<dbReference type="DrugBank" id="DB11796">
    <property type="generic name" value="Fostemsavir"/>
</dbReference>
<dbReference type="DrugBank" id="DB15149">
    <property type="generic name" value="Futibatinib"/>
</dbReference>
<dbReference type="DrugBank" id="DB00674">
    <property type="generic name" value="Galantamine"/>
</dbReference>
<dbReference type="DrugBank" id="DB12923">
    <property type="generic name" value="Gallopamil"/>
</dbReference>
<dbReference type="DrugBank" id="DB15097">
    <property type="generic name" value="Gefapixant"/>
</dbReference>
<dbReference type="DrugBank" id="DB00317">
    <property type="generic name" value="Gefitinib"/>
</dbReference>
<dbReference type="DrugBank" id="DB00441">
    <property type="generic name" value="Gemcitabine"/>
</dbReference>
<dbReference type="DrugBank" id="DB01645">
    <property type="generic name" value="Genistein"/>
</dbReference>
<dbReference type="DrugBank" id="DB12141">
    <property type="generic name" value="Gilteritinib"/>
</dbReference>
<dbReference type="DrugBank" id="DB11978">
    <property type="generic name" value="Glasdegib"/>
</dbReference>
<dbReference type="DrugBank" id="DB13879">
    <property type="generic name" value="Glecaprevir"/>
</dbReference>
<dbReference type="DrugBank" id="DB01016">
    <property type="generic name" value="Glyburide"/>
</dbReference>
<dbReference type="DrugBank" id="DB00027">
    <property type="generic name" value="Gramicidin D"/>
</dbReference>
<dbReference type="DrugBank" id="DB12836">
    <property type="generic name" value="Grapiprant"/>
</dbReference>
<dbReference type="DrugBank" id="DB11575">
    <property type="generic name" value="Grazoprevir"/>
</dbReference>
<dbReference type="DrugBank" id="DB00365">
    <property type="generic name" value="Grepafloxacin"/>
</dbReference>
<dbReference type="DrugBank" id="DB00502">
    <property type="generic name" value="Haloperidol"/>
</dbReference>
<dbReference type="DrugBank" id="DB14070">
    <property type="generic name" value="HM-30181"/>
</dbReference>
<dbReference type="DrugBank" id="DB14061">
    <property type="generic name" value="Hycanthone"/>
</dbReference>
<dbReference type="DrugBank" id="DB00741">
    <property type="generic name" value="Hydrocortisone"/>
</dbReference>
<dbReference type="DrugBank" id="DB14538">
    <property type="generic name" value="Hydrocortisone aceponate"/>
</dbReference>
<dbReference type="DrugBank" id="DB14539">
    <property type="generic name" value="Hydrocortisone acetate"/>
</dbReference>
<dbReference type="DrugBank" id="DB14540">
    <property type="generic name" value="Hydrocortisone butyrate"/>
</dbReference>
<dbReference type="DrugBank" id="DB14541">
    <property type="generic name" value="Hydrocortisone cypionate"/>
</dbReference>
<dbReference type="DrugBank" id="DB14542">
    <property type="generic name" value="Hydrocortisone phosphate"/>
</dbReference>
<dbReference type="DrugBank" id="DB14543">
    <property type="generic name" value="Hydrocortisone probutate"/>
</dbReference>
<dbReference type="DrugBank" id="DB14544">
    <property type="generic name" value="Hydrocortisone valerate"/>
</dbReference>
<dbReference type="DrugBank" id="DB01611">
    <property type="generic name" value="Hydroxychloroquine"/>
</dbReference>
<dbReference type="DrugBank" id="DB00557">
    <property type="generic name" value="Hydroxyzine"/>
</dbReference>
<dbReference type="DrugBank" id="DB12471">
    <property type="generic name" value="Ibrexafungerp"/>
</dbReference>
<dbReference type="DrugBank" id="DB01050">
    <property type="generic name" value="Ibuprofen"/>
</dbReference>
<dbReference type="DrugBank" id="DB09054">
    <property type="generic name" value="Idelalisib"/>
</dbReference>
<dbReference type="DrugBank" id="DB00619">
    <property type="generic name" value="Imatinib"/>
</dbReference>
<dbReference type="DrugBank" id="DB00458">
    <property type="generic name" value="Imipramine"/>
</dbReference>
<dbReference type="DrugBank" id="DB05039">
    <property type="generic name" value="Indacaterol"/>
</dbReference>
<dbReference type="DrugBank" id="DB00224">
    <property type="generic name" value="Indinavir"/>
</dbReference>
<dbReference type="DrugBank" id="DB00328">
    <property type="generic name" value="Indomethacin"/>
</dbReference>
<dbReference type="DrugBank" id="DB11886">
    <property type="generic name" value="Infigratinib"/>
</dbReference>
<dbReference type="DrugBank" id="DB05889">
    <property type="generic name" value="Inotuzumab ozogamicin"/>
</dbReference>
<dbReference type="DrugBank" id="DB00762">
    <property type="generic name" value="Irinotecan"/>
</dbReference>
<dbReference type="DrugBank" id="DB11633">
    <property type="generic name" value="Isavuconazole"/>
</dbReference>
<dbReference type="DrugBank" id="DB06636">
    <property type="generic name" value="Isavuconazonium"/>
</dbReference>
<dbReference type="DrugBank" id="DB11757">
    <property type="generic name" value="Istradefylline"/>
</dbReference>
<dbReference type="DrugBank" id="DB01167">
    <property type="generic name" value="Itraconazole"/>
</dbReference>
<dbReference type="DrugBank" id="DB08820">
    <property type="generic name" value="Ivacaftor"/>
</dbReference>
<dbReference type="DrugBank" id="DB00602">
    <property type="generic name" value="Ivermectin"/>
</dbReference>
<dbReference type="DrugBank" id="DB14568">
    <property type="generic name" value="Ivosidenib"/>
</dbReference>
<dbReference type="DrugBank" id="DB04845">
    <property type="generic name" value="Ixabepilone"/>
</dbReference>
<dbReference type="DrugBank" id="DB09570">
    <property type="generic name" value="Ixazomib"/>
</dbReference>
<dbReference type="DrugBank" id="DB01587">
    <property type="generic name" value="Ketazolam"/>
</dbReference>
<dbReference type="DrugBank" id="DB01026">
    <property type="generic name" value="Ketoconazole"/>
</dbReference>
<dbReference type="DrugBank" id="DB16956">
    <property type="generic name" value="L-Acetylleucine"/>
</dbReference>
<dbReference type="DrugBank" id="DB00709">
    <property type="generic name" value="Lamivudine"/>
</dbReference>
<dbReference type="DrugBank" id="DB00555">
    <property type="generic name" value="Lamotrigine"/>
</dbReference>
<dbReference type="DrugBank" id="DB12799">
    <property type="generic name" value="Laniquidar"/>
</dbReference>
<dbReference type="DrugBank" id="DB00448">
    <property type="generic name" value="Lansoprazole"/>
</dbReference>
<dbReference type="DrugBank" id="DB01259">
    <property type="generic name" value="Lapatinib"/>
</dbReference>
<dbReference type="DrugBank" id="DB14723">
    <property type="generic name" value="Larotrectinib"/>
</dbReference>
<dbReference type="DrugBank" id="DB11732">
    <property type="generic name" value="Lasmiditan"/>
</dbReference>
<dbReference type="DrugBank" id="DB09027">
    <property type="generic name" value="Ledipasvir"/>
</dbReference>
<dbReference type="DrugBank" id="DB12825">
    <property type="generic name" value="Lefamulin"/>
</dbReference>
<dbReference type="DrugBank" id="DB11951">
    <property type="generic name" value="Lemborexant"/>
</dbReference>
<dbReference type="DrugBank" id="DB15673">
    <property type="generic name" value="Lenacapavir"/>
</dbReference>
<dbReference type="DrugBank" id="DB00480">
    <property type="generic name" value="Lenalidomide"/>
</dbReference>
<dbReference type="DrugBank" id="DB16217">
    <property type="generic name" value="Leniolisib"/>
</dbReference>
<dbReference type="DrugBank" id="DB09078">
    <property type="generic name" value="Lenvatinib"/>
</dbReference>
<dbReference type="DrugBank" id="DB12070">
    <property type="generic name" value="Letermovir"/>
</dbReference>
<dbReference type="DrugBank" id="DB01006">
    <property type="generic name" value="Letrozole"/>
</dbReference>
<dbReference type="DrugBank" id="DB09237">
    <property type="generic name" value="Levamlodipine"/>
</dbReference>
<dbReference type="DrugBank" id="DB01202">
    <property type="generic name" value="Levetiracetam"/>
</dbReference>
<dbReference type="DrugBank" id="DB01137">
    <property type="generic name" value="Levofloxacin"/>
</dbReference>
<dbReference type="DrugBank" id="DB05667">
    <property type="generic name" value="Levoketoconazole"/>
</dbReference>
<dbReference type="DrugBank" id="DB08918">
    <property type="generic name" value="Levomilnacipran"/>
</dbReference>
<dbReference type="DrugBank" id="DB00451">
    <property type="generic name" value="Levothyroxine"/>
</dbReference>
<dbReference type="DrugBank" id="DB00281">
    <property type="generic name" value="Lidocaine"/>
</dbReference>
<dbReference type="DrugBank" id="DB08882">
    <property type="generic name" value="Linagliptin"/>
</dbReference>
<dbReference type="DrugBank" id="DB00279">
    <property type="generic name" value="Liothyronine"/>
</dbReference>
<dbReference type="DrugBank" id="DB01583">
    <property type="generic name" value="Liotrix"/>
</dbReference>
<dbReference type="DrugBank" id="DB09198">
    <property type="generic name" value="Lobeglitazone"/>
</dbReference>
<dbReference type="DrugBank" id="DB14065">
    <property type="generic name" value="Lomerizine"/>
</dbReference>
<dbReference type="DrugBank" id="DB08827">
    <property type="generic name" value="Lomitapide"/>
</dbReference>
<dbReference type="DrugBank" id="DB06448">
    <property type="generic name" value="Lonafarnib"/>
</dbReference>
<dbReference type="DrugBank" id="DB16220">
    <property type="generic name" value="Lonapegsomatropin"/>
</dbReference>
<dbReference type="DrugBank" id="DB16222">
    <property type="generic name" value="Loncastuximab tesirine"/>
</dbReference>
<dbReference type="DrugBank" id="DB00836">
    <property type="generic name" value="Loperamide"/>
</dbReference>
<dbReference type="DrugBank" id="DB01601">
    <property type="generic name" value="Lopinavir"/>
</dbReference>
<dbReference type="DrugBank" id="DB00455">
    <property type="generic name" value="Loratadine"/>
</dbReference>
<dbReference type="DrugBank" id="DB00678">
    <property type="generic name" value="Losartan"/>
</dbReference>
<dbReference type="DrugBank" id="DB00227">
    <property type="generic name" value="Lovastatin"/>
</dbReference>
<dbReference type="DrugBank" id="DB14146">
    <property type="generic name" value="Loxicodegol"/>
</dbReference>
<dbReference type="DrugBank" id="DB09280">
    <property type="generic name" value="Lumacaftor"/>
</dbReference>
<dbReference type="DrugBank" id="DB12674">
    <property type="generic name" value="Lurbinectedin"/>
</dbReference>
<dbReference type="DrugBank" id="DB13125">
    <property type="generic name" value="Lusutrombopag"/>
</dbReference>
<dbReference type="DrugBank" id="DB06234">
    <property type="generic name" value="Maribavir"/>
</dbReference>
<dbReference type="DrugBank" id="DB05501">
    <property type="generic name" value="Mavorixafor"/>
</dbReference>
<dbReference type="DrugBank" id="DB14009">
    <property type="generic name" value="Medical Cannabis"/>
</dbReference>
<dbReference type="DrugBank" id="DB00603">
    <property type="generic name" value="Medroxyprogesterone acetate"/>
</dbReference>
<dbReference type="DrugBank" id="DB00253">
    <property type="generic name" value="Medrysone"/>
</dbReference>
<dbReference type="DrugBank" id="DB00358">
    <property type="generic name" value="Mefloquine"/>
</dbReference>
<dbReference type="DrugBank" id="DB00351">
    <property type="generic name" value="Megestrol acetate"/>
</dbReference>
<dbReference type="DrugBank" id="DB00454">
    <property type="generic name" value="Meperidine"/>
</dbReference>
<dbReference type="DrugBank" id="DB00333">
    <property type="generic name" value="Methadone"/>
</dbReference>
<dbReference type="DrugBank" id="DB00563">
    <property type="generic name" value="Methotrexate"/>
</dbReference>
<dbReference type="DrugBank" id="DB09241">
    <property type="generic name" value="Methylene blue"/>
</dbReference>
<dbReference type="DrugBank" id="DB00959">
    <property type="generic name" value="Methylprednisolone"/>
</dbReference>
<dbReference type="DrugBank" id="DB01233">
    <property type="generic name" value="Metoclopramide"/>
</dbReference>
<dbReference type="DrugBank" id="DB00916">
    <property type="generic name" value="Metronidazole"/>
</dbReference>
<dbReference type="DrugBank" id="DB01388">
    <property type="generic name" value="Mibefradil"/>
</dbReference>
<dbReference type="DrugBank" id="DB01110">
    <property type="generic name" value="Miconazole"/>
</dbReference>
<dbReference type="DrugBank" id="DB00683">
    <property type="generic name" value="Midazolam"/>
</dbReference>
<dbReference type="DrugBank" id="DB00834">
    <property type="generic name" value="Mifepristone"/>
</dbReference>
<dbReference type="DrugBank" id="DB09031">
    <property type="generic name" value="Miltefosine"/>
</dbReference>
<dbReference type="DrugBank" id="DB08893">
    <property type="generic name" value="Mirabegron"/>
</dbReference>
<dbReference type="DrugBank" id="DB12489">
    <property type="generic name" value="Mirvetuximab soravtansine"/>
</dbReference>
<dbReference type="DrugBank" id="DB16236">
    <property type="generic name" value="Mitapivat"/>
</dbReference>
<dbReference type="DrugBank" id="DB00648">
    <property type="generic name" value="Mitotane"/>
</dbReference>
<dbReference type="DrugBank" id="DB01204">
    <property type="generic name" value="Mitoxantrone"/>
</dbReference>
<dbReference type="DrugBank" id="DB16390">
    <property type="generic name" value="Mobocertinib"/>
</dbReference>
<dbReference type="DrugBank" id="DB11763">
    <property type="generic name" value="Momelotinib"/>
</dbReference>
<dbReference type="DrugBank" id="DB11430">
    <property type="generic name" value="Monensin"/>
</dbReference>
<dbReference type="DrugBank" id="DB00295">
    <property type="generic name" value="Morphine"/>
</dbReference>
<dbReference type="DrugBank" id="DB00688">
    <property type="generic name" value="Mycophenolate mofetil"/>
</dbReference>
<dbReference type="DrugBank" id="DB01203">
    <property type="generic name" value="Nadolol"/>
</dbReference>
<dbReference type="DrugBank" id="DB01183">
    <property type="generic name" value="Naloxone"/>
</dbReference>
<dbReference type="DrugBank" id="DB00788">
    <property type="generic name" value="Naproxen"/>
</dbReference>
<dbReference type="DrugBank" id="DB03467">
    <property type="generic name" value="Naringenin"/>
</dbReference>
<dbReference type="DrugBank" id="DB01149">
    <property type="generic name" value="Nefazodone"/>
</dbReference>
<dbReference type="DrugBank" id="DB00220">
    <property type="generic name" value="Nelfinavir"/>
</dbReference>
<dbReference type="DrugBank" id="DB11828">
    <property type="generic name" value="Neratinib"/>
</dbReference>
<dbReference type="DrugBank" id="DB09048">
    <property type="generic name" value="Netupitant"/>
</dbReference>
<dbReference type="DrugBank" id="DB00622">
    <property type="generic name" value="Nicardipine"/>
</dbReference>
<dbReference type="DrugBank" id="DB01115">
    <property type="generic name" value="Nifedipine"/>
</dbReference>
<dbReference type="DrugBank" id="DB09239">
    <property type="generic name" value="Niguldipine"/>
</dbReference>
<dbReference type="DrugBank" id="DB04868">
    <property type="generic name" value="Nilotinib"/>
</dbReference>
<dbReference type="DrugBank" id="DB09079">
    <property type="generic name" value="Nintedanib"/>
</dbReference>
<dbReference type="DrugBank" id="DB11793">
    <property type="generic name" value="Niraparib"/>
</dbReference>
<dbReference type="DrugBank" id="DB16691">
    <property type="generic name" value="Nirmatrelvir"/>
</dbReference>
<dbReference type="DrugBank" id="DB12005">
    <property type="generic name" value="Nirogacestat"/>
</dbReference>
<dbReference type="DrugBank" id="DB00401">
    <property type="generic name" value="Nisoldipine"/>
</dbReference>
<dbReference type="DrugBank" id="DB01054">
    <property type="generic name" value="Nitrendipine"/>
</dbReference>
<dbReference type="DrugBank" id="DB00698">
    <property type="generic name" value="Nitrofurantoin"/>
</dbReference>
<dbReference type="DrugBank" id="DB00585">
    <property type="generic name" value="Nizatidine"/>
</dbReference>
<dbReference type="DrugBank" id="DB00717">
    <property type="generic name" value="Norethisterone"/>
</dbReference>
<dbReference type="DrugBank" id="DB00957">
    <property type="generic name" value="Norgestimate"/>
</dbReference>
<dbReference type="DrugBank" id="DB00540">
    <property type="generic name" value="Nortriptyline"/>
</dbReference>
<dbReference type="DrugBank" id="DB00104">
    <property type="generic name" value="Octreotide"/>
</dbReference>
<dbReference type="DrugBank" id="DB06670">
    <property type="generic name" value="Odanacatib"/>
</dbReference>
<dbReference type="DrugBank" id="DB16261">
    <property type="generic name" value="Odevixibat"/>
</dbReference>
<dbReference type="DrugBank" id="DB00334">
    <property type="generic name" value="Olanzapine"/>
</dbReference>
<dbReference type="DrugBank" id="DB09074">
    <property type="generic name" value="Olaparib"/>
</dbReference>
<dbReference type="DrugBank" id="DB00768">
    <property type="generic name" value="Olopatadine"/>
</dbReference>
<dbReference type="DrugBank" id="DB16267">
    <property type="generic name" value="Olutasidenib"/>
</dbReference>
<dbReference type="DrugBank" id="DB12455">
    <property type="generic name" value="Omadacycline"/>
</dbReference>
<dbReference type="DrugBank" id="DB09296">
    <property type="generic name" value="Ombitasvir"/>
</dbReference>
<dbReference type="DrugBank" id="DB00338">
    <property type="generic name" value="Omeprazole"/>
</dbReference>
<dbReference type="DrugBank" id="DB14069">
    <property type="generic name" value="ONT-093"/>
</dbReference>
<dbReference type="DrugBank" id="DB11632">
    <property type="generic name" value="Opicapone"/>
</dbReference>
<dbReference type="DrugBank" id="DB09330">
    <property type="generic name" value="Osimertinib"/>
</dbReference>
<dbReference type="DrugBank" id="DB00776">
    <property type="generic name" value="Oxcarbazepine"/>
</dbReference>
<dbReference type="DrugBank" id="DB12612">
    <property type="generic name" value="Ozanimod"/>
</dbReference>
<dbReference type="DrugBank" id="DB01229">
    <property type="generic name" value="Paclitaxel"/>
</dbReference>
<dbReference type="DrugBank" id="DB11697">
    <property type="generic name" value="Pacritinib"/>
</dbReference>
<dbReference type="DrugBank" id="DB09073">
    <property type="generic name" value="Palbociclib"/>
</dbReference>
<dbReference type="DrugBank" id="DB01267">
    <property type="generic name" value="Paliperidone"/>
</dbReference>
<dbReference type="DrugBank" id="DB06603">
    <property type="generic name" value="Panobinostat"/>
</dbReference>
<dbReference type="DrugBank" id="DB00213">
    <property type="generic name" value="Pantoprazole"/>
</dbReference>
<dbReference type="DrugBank" id="DB09297">
    <property type="generic name" value="Paritaprevir"/>
</dbReference>
<dbReference type="DrugBank" id="DB00715">
    <property type="generic name" value="Paroxetine"/>
</dbReference>
<dbReference type="DrugBank" id="DB06589">
    <property type="generic name" value="Pazopanib"/>
</dbReference>
<dbReference type="DrugBank" id="DB15102">
    <property type="generic name" value="Pemigatinib"/>
</dbReference>
<dbReference type="DrugBank" id="DB00652">
    <property type="generic name" value="Pentazocine"/>
</dbReference>
<dbReference type="DrugBank" id="DB01174">
    <property type="generic name" value="Phenobarbital"/>
</dbReference>
<dbReference type="DrugBank" id="DB00252">
    <property type="generic name" value="Phenytoin"/>
</dbReference>
<dbReference type="DrugBank" id="DB13878">
    <property type="generic name" value="Pibrentasvir"/>
</dbReference>
<dbReference type="DrugBank" id="DB01100">
    <property type="generic name" value="Pimozide"/>
</dbReference>
<dbReference type="DrugBank" id="DB12582">
    <property type="generic name" value="Piperine"/>
</dbReference>
<dbReference type="DrugBank" id="DB04951">
    <property type="generic name" value="Pirfenidone"/>
</dbReference>
<dbReference type="DrugBank" id="DB17472">
    <property type="generic name" value="Pirtobrutinib"/>
</dbReference>
<dbReference type="DrugBank" id="DB08860">
    <property type="generic name" value="Pitavastatin"/>
</dbReference>
<dbReference type="DrugBank" id="DB02261">
    <property type="generic name" value="Platelet Activating Factor"/>
</dbReference>
<dbReference type="DrugBank" id="DB12240">
    <property type="generic name" value="Polatuzumab vedotin"/>
</dbReference>
<dbReference type="DrugBank" id="DB09287">
    <property type="generic name" value="Polyethylene glycol"/>
</dbReference>
<dbReference type="DrugBank" id="DB11077">
    <property type="generic name" value="Polyethylene glycol 400"/>
</dbReference>
<dbReference type="DrugBank" id="DB08910">
    <property type="generic name" value="Pomalidomide"/>
</dbReference>
<dbReference type="DrugBank" id="DB08901">
    <property type="generic name" value="Ponatinib"/>
</dbReference>
<dbReference type="DrugBank" id="DB01263">
    <property type="generic name" value="Posaconazole"/>
</dbReference>
<dbReference type="DrugBank" id="DB15822">
    <property type="generic name" value="Pralsetinib"/>
</dbReference>
<dbReference type="DrugBank" id="DB00175">
    <property type="generic name" value="Pravastatin"/>
</dbReference>
<dbReference type="DrugBank" id="DB00457">
    <property type="generic name" value="Prazosin"/>
</dbReference>
<dbReference type="DrugBank" id="DB00860">
    <property type="generic name" value="Prednisolone"/>
</dbReference>
<dbReference type="DrugBank" id="DB15566">
    <property type="generic name" value="Prednisolone acetate"/>
</dbReference>
<dbReference type="DrugBank" id="DB14631">
    <property type="generic name" value="Prednisolone phosphate"/>
</dbReference>
<dbReference type="DrugBank" id="DB00635">
    <property type="generic name" value="Prednisone"/>
</dbReference>
<dbReference type="DrugBank" id="DB01087">
    <property type="generic name" value="Primaquine"/>
</dbReference>
<dbReference type="DrugBank" id="DB00396">
    <property type="generic name" value="Progesterone"/>
</dbReference>
<dbReference type="DrugBank" id="DB01069">
    <property type="generic name" value="Promethazine"/>
</dbReference>
<dbReference type="DrugBank" id="DB01182">
    <property type="generic name" value="Propafenone"/>
</dbReference>
<dbReference type="DrugBank" id="DB00818">
    <property type="generic name" value="Propofol"/>
</dbReference>
<dbReference type="DrugBank" id="DB00571">
    <property type="generic name" value="Propranolol"/>
</dbReference>
<dbReference type="DrugBank" id="DB00344">
    <property type="generic name" value="Protriptyline"/>
</dbReference>
<dbReference type="DrugBank" id="DB06480">
    <property type="generic name" value="Prucalopride"/>
</dbReference>
<dbReference type="DrugBank" id="DB04216">
    <property type="generic name" value="Quercetin"/>
</dbReference>
<dbReference type="DrugBank" id="DB01224">
    <property type="generic name" value="Quetiapine"/>
</dbReference>
<dbReference type="DrugBank" id="DB01103">
    <property type="generic name" value="Quinacrine"/>
</dbReference>
<dbReference type="DrugBank" id="DB00908">
    <property type="generic name" value="Quinidine"/>
</dbReference>
<dbReference type="DrugBank" id="DB00468">
    <property type="generic name" value="Quinine"/>
</dbReference>
<dbReference type="DrugBank" id="DB12874">
    <property type="generic name" value="Quizartinib"/>
</dbReference>
<dbReference type="DrugBank" id="DB00481">
    <property type="generic name" value="Raloxifene"/>
</dbReference>
<dbReference type="DrugBank" id="DB00863">
    <property type="generic name" value="Ranitidine"/>
</dbReference>
<dbReference type="DrugBank" id="DB00243">
    <property type="generic name" value="Ranolazine"/>
</dbReference>
<dbReference type="DrugBank" id="DB00234">
    <property type="generic name" value="Reboxetine"/>
</dbReference>
<dbReference type="DrugBank" id="DB08896">
    <property type="generic name" value="Regorafenib"/>
</dbReference>
<dbReference type="DrugBank" id="DB11853">
    <property type="generic name" value="Relugolix"/>
</dbReference>
<dbReference type="DrugBank" id="DB14761">
    <property type="generic name" value="Remdesivir"/>
</dbReference>
<dbReference type="DrugBank" id="DB16826">
    <property type="generic name" value="Repotrectinib"/>
</dbReference>
<dbReference type="DrugBank" id="DB00206">
    <property type="generic name" value="Reserpine"/>
</dbReference>
<dbReference type="DrugBank" id="DB11855">
    <property type="generic name" value="Revefenacin"/>
</dbReference>
<dbReference type="DrugBank" id="DB14072">
    <property type="generic name" value="Reversin 121"/>
</dbReference>
<dbReference type="DrugBank" id="DB03825">
    <property type="generic name" value="Rhodamine 6G"/>
</dbReference>
<dbReference type="DrugBank" id="DB00615">
    <property type="generic name" value="Rifabutin"/>
</dbReference>
<dbReference type="DrugBank" id="DB01045">
    <property type="generic name" value="Rifampin"/>
</dbReference>
<dbReference type="DrugBank" id="DB11753">
    <property type="generic name" value="Rifamycin"/>
</dbReference>
<dbReference type="DrugBank" id="DB08864">
    <property type="generic name" value="Rilpivirine"/>
</dbReference>
<dbReference type="DrugBank" id="DB12457">
    <property type="generic name" value="Rimegepant"/>
</dbReference>
<dbReference type="DrugBank" id="DB08931">
    <property type="generic name" value="Riociguat"/>
</dbReference>
<dbReference type="DrugBank" id="DB14840">
    <property type="generic name" value="Ripretinib"/>
</dbReference>
<dbReference type="DrugBank" id="DB15305">
    <property type="generic name" value="Risdiplam"/>
</dbReference>
<dbReference type="DrugBank" id="DB00734">
    <property type="generic name" value="Risperidone"/>
</dbReference>
<dbReference type="DrugBank" id="DB00503">
    <property type="generic name" value="Ritonavir"/>
</dbReference>
<dbReference type="DrugBank" id="DB06228">
    <property type="generic name" value="Rivaroxaban"/>
</dbReference>
<dbReference type="DrugBank" id="DB09291">
    <property type="generic name" value="Rolapitant"/>
</dbReference>
<dbReference type="DrugBank" id="DB06176">
    <property type="generic name" value="Romidepsin"/>
</dbReference>
<dbReference type="DrugBank" id="DB00778">
    <property type="generic name" value="Roxithromycin"/>
</dbReference>
<dbReference type="DrugBank" id="DB12332">
    <property type="generic name" value="Rucaparib"/>
</dbReference>
<dbReference type="DrugBank" id="DB11544">
    <property type="generic name" value="Salinomycin"/>
</dbReference>
<dbReference type="DrugBank" id="DB00360">
    <property type="generic name" value="Sapropterin"/>
</dbReference>
<dbReference type="DrugBank" id="DB01232">
    <property type="generic name" value="Saquinavir"/>
</dbReference>
<dbReference type="DrugBank" id="DB12541">
    <property type="generic name" value="SAR-405838"/>
</dbReference>
<dbReference type="DrugBank" id="DB12035">
    <property type="generic name" value="Sarecycline"/>
</dbReference>
<dbReference type="DrugBank" id="DB12390">
    <property type="generic name" value="Seladelpar"/>
</dbReference>
<dbReference type="DrugBank" id="DB01037">
    <property type="generic name" value="Selegiline"/>
</dbReference>
<dbReference type="DrugBank" id="DB11362">
    <property type="generic name" value="Selexipag"/>
</dbReference>
<dbReference type="DrugBank" id="DB15685">
    <property type="generic name" value="Selpercatinib"/>
</dbReference>
<dbReference type="DrugBank" id="DB11689">
    <property type="generic name" value="Selumetinib"/>
</dbReference>
<dbReference type="DrugBank" id="DB01104">
    <property type="generic name" value="Sertraline"/>
</dbReference>
<dbReference type="DrugBank" id="DB00203">
    <property type="generic name" value="Sildenafil"/>
</dbReference>
<dbReference type="DrugBank" id="DB06207">
    <property type="generic name" value="Silodosin"/>
</dbReference>
<dbReference type="DrugBank" id="DB06290">
    <property type="generic name" value="Simeprevir"/>
</dbReference>
<dbReference type="DrugBank" id="DB00641">
    <property type="generic name" value="Simvastatin"/>
</dbReference>
<dbReference type="DrugBank" id="DB00877">
    <property type="generic name" value="Sirolimus"/>
</dbReference>
<dbReference type="DrugBank" id="DB01261">
    <property type="generic name" value="Sitagliptin"/>
</dbReference>
<dbReference type="DrugBank" id="DB08934">
    <property type="generic name" value="Sofosbuvir"/>
</dbReference>
<dbReference type="DrugBank" id="DB09099">
    <property type="generic name" value="Somatostatin"/>
</dbReference>
<dbReference type="DrugBank" id="DB00052">
    <property type="generic name" value="Somatotropin"/>
</dbReference>
<dbReference type="DrugBank" id="DB00398">
    <property type="generic name" value="Sorafenib"/>
</dbReference>
<dbReference type="DrugBank" id="DB12713">
    <property type="generic name" value="Sotagliflozin"/>
</dbReference>
<dbReference type="DrugBank" id="DB15569">
    <property type="generic name" value="Sotorasib"/>
</dbReference>
<dbReference type="DrugBank" id="DB01208">
    <property type="generic name" value="Sparfloxacin"/>
</dbReference>
<dbReference type="DrugBank" id="DB12548">
    <property type="generic name" value="Sparsentan"/>
</dbReference>
<dbReference type="DrugBank" id="DB03203">
    <property type="generic name" value="Sphingosine"/>
</dbReference>
<dbReference type="DrugBank" id="DB00421">
    <property type="generic name" value="Spironolactone"/>
</dbReference>
<dbReference type="DrugBank" id="DB01323">
    <property type="generic name" value="St. John's Wort"/>
</dbReference>
<dbReference type="DrugBank" id="DB02901">
    <property type="generic name" value="Stanolone"/>
</dbReference>
<dbReference type="DrugBank" id="DB13951">
    <property type="generic name" value="Stanolone acetate"/>
</dbReference>
<dbReference type="DrugBank" id="DB02010">
    <property type="generic name" value="Staurosporine"/>
</dbReference>
<dbReference type="DrugBank" id="DB09118">
    <property type="generic name" value="Stiripentol"/>
</dbReference>
<dbReference type="DrugBank" id="DB00428">
    <property type="generic name" value="Streptozocin"/>
</dbReference>
<dbReference type="DrugBank" id="DB00391">
    <property type="generic name" value="Sulpiride"/>
</dbReference>
<dbReference type="DrugBank" id="DB00669">
    <property type="generic name" value="Sumatriptan"/>
</dbReference>
<dbReference type="DrugBank" id="DB01268">
    <property type="generic name" value="Sunitinib"/>
</dbReference>
<dbReference type="DrugBank" id="DB09034">
    <property type="generic name" value="Suvorexant"/>
</dbReference>
<dbReference type="DrugBank" id="DB00382">
    <property type="generic name" value="Tacrine"/>
</dbReference>
<dbReference type="DrugBank" id="DB00864">
    <property type="generic name" value="Tacrolimus"/>
</dbReference>
<dbReference type="DrugBank" id="DB11760">
    <property type="generic name" value="Talazoparib"/>
</dbReference>
<dbReference type="DrugBank" id="DB11770">
    <property type="generic name" value="Talinolol"/>
</dbReference>
<dbReference type="DrugBank" id="DB00675">
    <property type="generic name" value="Tamoxifen"/>
</dbReference>
<dbReference type="DrugBank" id="DB06240">
    <property type="generic name" value="Tariquidar"/>
</dbReference>
<dbReference type="DrugBank" id="DB04348">
    <property type="generic name" value="Taurocholic acid"/>
</dbReference>
<dbReference type="DrugBank" id="DB12887">
    <property type="generic name" value="Tazemetostat"/>
</dbReference>
<dbReference type="DrugBank" id="DB09161">
    <property type="generic name" value="Technetium Tc-99m sestamibi"/>
</dbReference>
<dbReference type="DrugBank" id="DB09160">
    <property type="generic name" value="Technetium Tc-99m tetrofosmin"/>
</dbReference>
<dbReference type="DrugBank" id="DB01079">
    <property type="generic name" value="Tegaserod"/>
</dbReference>
<dbReference type="DrugBank" id="DB05521">
    <property type="generic name" value="Telaprevir"/>
</dbReference>
<dbReference type="DrugBank" id="DB00966">
    <property type="generic name" value="Telmisartan"/>
</dbReference>
<dbReference type="DrugBank" id="DB12095">
    <property type="generic name" value="Telotristat ethyl"/>
</dbReference>
<dbReference type="DrugBank" id="DB00853">
    <property type="generic name" value="Temozolomide"/>
</dbReference>
<dbReference type="DrugBank" id="DB06287">
    <property type="generic name" value="Temsirolimus"/>
</dbReference>
<dbReference type="DrugBank" id="DB14126">
    <property type="generic name" value="Tenofovir"/>
</dbReference>
<dbReference type="DrugBank" id="DB09299">
    <property type="generic name" value="Tenofovir alafenamide"/>
</dbReference>
<dbReference type="DrugBank" id="DB00300">
    <property type="generic name" value="Tenofovir disoproxil"/>
</dbReference>
<dbReference type="DrugBank" id="DB15133">
    <property type="generic name" value="Tepotinib"/>
</dbReference>
<dbReference type="DrugBank" id="DB01162">
    <property type="generic name" value="Terazosin"/>
</dbReference>
<dbReference type="DrugBank" id="DB00342">
    <property type="generic name" value="Terfenadine"/>
</dbReference>
<dbReference type="DrugBank" id="DB04905">
    <property type="generic name" value="Tesmilifene"/>
</dbReference>
<dbReference type="DrugBank" id="DB13943">
    <property type="generic name" value="Testosterone cypionate"/>
</dbReference>
<dbReference type="DrugBank" id="DB13944">
    <property type="generic name" value="Testosterone enanthate"/>
</dbReference>
<dbReference type="DrugBank" id="DB01420">
    <property type="generic name" value="Testosterone propionate"/>
</dbReference>
<dbReference type="DrugBank" id="DB13946">
    <property type="generic name" value="Testosterone undecanoate"/>
</dbReference>
<dbReference type="DrugBank" id="DB14066">
    <property type="generic name" value="Tetrandrine"/>
</dbReference>
<dbReference type="DrugBank" id="DB11712">
    <property type="generic name" value="Tezacaftor"/>
</dbReference>
<dbReference type="DrugBank" id="DB08816">
    <property type="generic name" value="Ticagrelor"/>
</dbReference>
<dbReference type="DrugBank" id="DB00373">
    <property type="generic name" value="Timolol"/>
</dbReference>
<dbReference type="DrugBank" id="DB04960">
    <property type="generic name" value="Tipifarnib"/>
</dbReference>
<dbReference type="DrugBank" id="DB00932">
    <property type="generic name" value="Tipranavir"/>
</dbReference>
<dbReference type="DrugBank" id="DB16732">
    <property type="generic name" value="Tisotumab vedotin"/>
</dbReference>
<dbReference type="DrugBank" id="DB11800">
    <property type="generic name" value="Tivozanib"/>
</dbReference>
<dbReference type="DrugBank" id="DB11635">
    <property type="generic name" value="Tocofersolan"/>
</dbReference>
<dbReference type="DrugBank" id="DB11251">
    <property type="generic name" value="Tocopherol"/>
</dbReference>
<dbReference type="DrugBank" id="DB06212">
    <property type="generic name" value="Tolvaptan"/>
</dbReference>
<dbReference type="DrugBank" id="DB00273">
    <property type="generic name" value="Topiramate"/>
</dbReference>
<dbReference type="DrugBank" id="DB01030">
    <property type="generic name" value="Topotecan"/>
</dbReference>
<dbReference type="DrugBank" id="DB00539">
    <property type="generic name" value="Toremifene"/>
</dbReference>
<dbReference type="DrugBank" id="DB14962">
    <property type="generic name" value="Trastuzumab deruxtecan"/>
</dbReference>
<dbReference type="DrugBank" id="DB05773">
    <property type="generic name" value="Trastuzumab emtansine"/>
</dbReference>
<dbReference type="DrugBank" id="DB00656">
    <property type="generic name" value="Trazodone"/>
</dbReference>
<dbReference type="DrugBank" id="DB00831">
    <property type="generic name" value="Trifluoperazine"/>
</dbReference>
<dbReference type="DrugBank" id="DB00508">
    <property type="generic name" value="Triflupromazine"/>
</dbReference>
<dbReference type="DrugBank" id="DB15442">
    <property type="generic name" value="Trilaciclib"/>
</dbReference>
<dbReference type="DrugBank" id="DB00440">
    <property type="generic name" value="Trimethoprim"/>
</dbReference>
<dbReference type="DrugBank" id="DB00726">
    <property type="generic name" value="Trimipramine"/>
</dbReference>
<dbReference type="DrugBank" id="DB13179">
    <property type="generic name" value="Troleandomycin"/>
</dbReference>
<dbReference type="DrugBank" id="DB11652">
    <property type="generic name" value="Tucatinib"/>
</dbReference>
<dbReference type="DrugBank" id="DB09270">
    <property type="generic name" value="Ubidecarenone"/>
</dbReference>
<dbReference type="DrugBank" id="DB15328">
    <property type="generic name" value="Ubrogepant"/>
</dbReference>
<dbReference type="DrugBank" id="DB14989">
    <property type="generic name" value="Umbralisib"/>
</dbReference>
<dbReference type="DrugBank" id="DB09076">
    <property type="generic name" value="Umeclidinium"/>
</dbReference>
<dbReference type="DrugBank" id="DB15091">
    <property type="generic name" value="Upadacitinib"/>
</dbReference>
<dbReference type="DrugBank" id="DB14057">
    <property type="generic name" value="Valinomycin"/>
</dbReference>
<dbReference type="DrugBank" id="DB11869">
    <property type="generic name" value="Valspodar"/>
</dbReference>
<dbReference type="DrugBank" id="DB05294">
    <property type="generic name" value="Vandetanib"/>
</dbReference>
<dbReference type="DrugBank" id="DB00862">
    <property type="generic name" value="Vardenafil"/>
</dbReference>
<dbReference type="DrugBank" id="DB01339">
    <property type="generic name" value="Vecuronium"/>
</dbReference>
<dbReference type="DrugBank" id="DB11613">
    <property type="generic name" value="Velpatasvir"/>
</dbReference>
<dbReference type="DrugBank" id="DB08881">
    <property type="generic name" value="Vemurafenib"/>
</dbReference>
<dbReference type="DrugBank" id="DB11581">
    <property type="generic name" value="Venetoclax"/>
</dbReference>
<dbReference type="DrugBank" id="DB00285">
    <property type="generic name" value="Venlafaxine"/>
</dbReference>
<dbReference type="DrugBank" id="DB00661">
    <property type="generic name" value="Verapamil"/>
</dbReference>
<dbReference type="DrugBank" id="DB15456">
    <property type="generic name" value="Vericiguat"/>
</dbReference>
<dbReference type="DrugBank" id="DB14895">
    <property type="generic name" value="Vibegron"/>
</dbReference>
<dbReference type="DrugBank" id="DB09082">
    <property type="generic name" value="Vilanterol"/>
</dbReference>
<dbReference type="DrugBank" id="DB04876">
    <property type="generic name" value="Vildagliptin"/>
</dbReference>
<dbReference type="DrugBank" id="DB00570">
    <property type="generic name" value="Vinblastine"/>
</dbReference>
<dbReference type="DrugBank" id="DB00541">
    <property type="generic name" value="Vincristine"/>
</dbReference>
<dbReference type="DrugBank" id="DB11641">
    <property type="generic name" value="Vinflunine"/>
</dbReference>
<dbReference type="DrugBank" id="DB08828">
    <property type="generic name" value="Vismodegib"/>
</dbReference>
<dbReference type="DrugBank" id="DB04877">
    <property type="generic name" value="Voacamine"/>
</dbReference>
<dbReference type="DrugBank" id="DB11693">
    <property type="generic name" value="Voclosporin"/>
</dbReference>
<dbReference type="DrugBank" id="DB11739">
    <property type="generic name" value="Vonoprazan"/>
</dbReference>
<dbReference type="DrugBank" id="DB09030">
    <property type="generic name" value="Vorapaxar"/>
</dbReference>
<dbReference type="DrugBank" id="DB12026">
    <property type="generic name" value="Voxilaprevir"/>
</dbReference>
<dbReference type="DrugBank" id="DB15357">
    <property type="generic name" value="Xanomeline"/>
</dbReference>
<dbReference type="DrugBank" id="DB15035">
    <property type="generic name" value="Zanubrutinib"/>
</dbReference>
<dbReference type="DrugBank" id="DB15688">
    <property type="generic name" value="Zavegepant"/>
</dbReference>
<dbReference type="DrugBank" id="DB00495">
    <property type="generic name" value="Zidovudine"/>
</dbReference>
<dbReference type="DrugBank" id="DB04832">
    <property type="generic name" value="Zimelidine"/>
</dbReference>
<dbReference type="DrugBank" id="DB00246">
    <property type="generic name" value="Ziprasidone"/>
</dbReference>
<dbReference type="DrugBank" id="DB00315">
    <property type="generic name" value="Zolmitriptan"/>
</dbReference>
<dbReference type="DrugBank" id="DB00909">
    <property type="generic name" value="Zonisamide"/>
</dbReference>
<dbReference type="DrugBank" id="DB06191">
    <property type="generic name" value="Zosuquidar"/>
</dbReference>
<dbReference type="DrugCentral" id="P08183"/>
<dbReference type="GuidetoPHARMACOLOGY" id="768"/>
<dbReference type="SwissLipids" id="SLP:000000385"/>
<dbReference type="MoonDB" id="P08183">
    <property type="type" value="Curated"/>
</dbReference>
<dbReference type="MoonProt" id="P08183"/>
<dbReference type="TCDB" id="3.A.1.201.1">
    <property type="family name" value="the atp-binding cassette (abc) superfamily"/>
</dbReference>
<dbReference type="GlyCosmos" id="P08183">
    <property type="glycosylation" value="4 sites, 1 glycan"/>
</dbReference>
<dbReference type="GlyGen" id="P08183">
    <property type="glycosylation" value="9 sites, 3 N-linked glycans (3 sites), 1 O-linked glycan (1 site)"/>
</dbReference>
<dbReference type="iPTMnet" id="P08183"/>
<dbReference type="PhosphoSitePlus" id="P08183"/>
<dbReference type="SwissPalm" id="P08183"/>
<dbReference type="BioMuta" id="ABCB1"/>
<dbReference type="DMDM" id="238054374"/>
<dbReference type="jPOST" id="P08183"/>
<dbReference type="MassIVE" id="P08183"/>
<dbReference type="PaxDb" id="9606-ENSP00000478255"/>
<dbReference type="PeptideAtlas" id="P08183"/>
<dbReference type="ProteomicsDB" id="52080">
    <molecule id="P08183-1"/>
</dbReference>
<dbReference type="ProteomicsDB" id="5934"/>
<dbReference type="Pumba" id="P08183"/>
<dbReference type="ABCD" id="P08183">
    <property type="antibodies" value="3 sequenced antibodies"/>
</dbReference>
<dbReference type="Antibodypedia" id="3443">
    <property type="antibodies" value="1497 antibodies from 50 providers"/>
</dbReference>
<dbReference type="CPTC" id="P08183">
    <property type="antibodies" value="6 antibodies"/>
</dbReference>
<dbReference type="DNASU" id="5243"/>
<dbReference type="Ensembl" id="ENST00000265724.8">
    <molecule id="P08183-1"/>
    <property type="protein sequence ID" value="ENSP00000265724.3"/>
    <property type="gene ID" value="ENSG00000085563.15"/>
</dbReference>
<dbReference type="Ensembl" id="ENST00000543898.5">
    <molecule id="P08183-2"/>
    <property type="protein sequence ID" value="ENSP00000444095.1"/>
    <property type="gene ID" value="ENSG00000085563.15"/>
</dbReference>
<dbReference type="Ensembl" id="ENST00000622132.5">
    <molecule id="P08183-1"/>
    <property type="protein sequence ID" value="ENSP00000478255.1"/>
    <property type="gene ID" value="ENSG00000085563.15"/>
</dbReference>
<dbReference type="GeneID" id="5243"/>
<dbReference type="KEGG" id="hsa:5243"/>
<dbReference type="MANE-Select" id="ENST00000622132.5">
    <property type="protein sequence ID" value="ENSP00000478255.1"/>
    <property type="RefSeq nucleotide sequence ID" value="NM_001348946.2"/>
    <property type="RefSeq protein sequence ID" value="NP_001335875.1"/>
</dbReference>
<dbReference type="UCSC" id="uc003uiz.3">
    <molecule id="P08183-1"/>
    <property type="organism name" value="human"/>
</dbReference>
<dbReference type="AGR" id="HGNC:40"/>
<dbReference type="CTD" id="5243"/>
<dbReference type="DisGeNET" id="5243"/>
<dbReference type="GeneCards" id="ABCB1"/>
<dbReference type="HGNC" id="HGNC:40">
    <property type="gene designation" value="ABCB1"/>
</dbReference>
<dbReference type="HPA" id="ENSG00000085563">
    <property type="expression patterns" value="Tissue enhanced (adrenal gland, intestine)"/>
</dbReference>
<dbReference type="MalaCards" id="ABCB1"/>
<dbReference type="MIM" id="171050">
    <property type="type" value="gene"/>
</dbReference>
<dbReference type="MIM" id="612244">
    <property type="type" value="phenotype"/>
</dbReference>
<dbReference type="MIM" id="620950">
    <property type="type" value="phenotype"/>
</dbReference>
<dbReference type="neXtProt" id="NX_P08183"/>
<dbReference type="OpenTargets" id="ENSG00000085563"/>
<dbReference type="PharmGKB" id="PA267"/>
<dbReference type="VEuPathDB" id="HostDB:ENSG00000085563"/>
<dbReference type="eggNOG" id="KOG0055">
    <property type="taxonomic scope" value="Eukaryota"/>
</dbReference>
<dbReference type="GeneTree" id="ENSGT00940000155287"/>
<dbReference type="HOGENOM" id="CLU_000604_17_2_1"/>
<dbReference type="InParanoid" id="P08183"/>
<dbReference type="OMA" id="IGMAAPY"/>
<dbReference type="OrthoDB" id="6500128at2759"/>
<dbReference type="PAN-GO" id="P08183">
    <property type="GO annotations" value="9 GO annotations based on evolutionary models"/>
</dbReference>
<dbReference type="PhylomeDB" id="P08183"/>
<dbReference type="TreeFam" id="TF105193"/>
<dbReference type="BioCyc" id="MetaCyc:HS01500-MONOMER"/>
<dbReference type="BRENDA" id="7.6.2.2">
    <property type="organism ID" value="2681"/>
</dbReference>
<dbReference type="BRENDA" id="7.6.2.3">
    <property type="organism ID" value="2681"/>
</dbReference>
<dbReference type="PathwayCommons" id="P08183"/>
<dbReference type="Reactome" id="R-HSA-2161517">
    <property type="pathway name" value="Abacavir transmembrane transport"/>
</dbReference>
<dbReference type="Reactome" id="R-HSA-382556">
    <property type="pathway name" value="ABC-family proteins mediated transport"/>
</dbReference>
<dbReference type="Reactome" id="R-HSA-9754706">
    <property type="pathway name" value="Atorvastatin ADME"/>
</dbReference>
<dbReference type="Reactome" id="R-HSA-9757110">
    <property type="pathway name" value="Prednisone ADME"/>
</dbReference>
<dbReference type="SignaLink" id="P08183"/>
<dbReference type="SIGNOR" id="P08183"/>
<dbReference type="BioGRID-ORCS" id="5243">
    <property type="hits" value="20 hits in 1159 CRISPR screens"/>
</dbReference>
<dbReference type="ChiTaRS" id="ABCB1">
    <property type="organism name" value="human"/>
</dbReference>
<dbReference type="GeneWiki" id="P-glycoprotein"/>
<dbReference type="GenomeRNAi" id="5243"/>
<dbReference type="Pharos" id="P08183">
    <property type="development level" value="Tchem"/>
</dbReference>
<dbReference type="PRO" id="PR:P08183"/>
<dbReference type="Proteomes" id="UP000005640">
    <property type="component" value="Chromosome 7"/>
</dbReference>
<dbReference type="RNAct" id="P08183">
    <property type="molecule type" value="protein"/>
</dbReference>
<dbReference type="Bgee" id="ENSG00000085563">
    <property type="expression patterns" value="Expressed in right adrenal gland and 156 other cell types or tissues"/>
</dbReference>
<dbReference type="ExpressionAtlas" id="P08183">
    <property type="expression patterns" value="baseline and differential"/>
</dbReference>
<dbReference type="GO" id="GO:0016324">
    <property type="term" value="C:apical plasma membrane"/>
    <property type="evidence" value="ECO:0000314"/>
    <property type="project" value="UniProtKB"/>
</dbReference>
<dbReference type="GO" id="GO:0031526">
    <property type="term" value="C:brush border membrane"/>
    <property type="evidence" value="ECO:0007669"/>
    <property type="project" value="Ensembl"/>
</dbReference>
<dbReference type="GO" id="GO:0009986">
    <property type="term" value="C:cell surface"/>
    <property type="evidence" value="ECO:0000314"/>
    <property type="project" value="DFLAT"/>
</dbReference>
<dbReference type="GO" id="GO:0005737">
    <property type="term" value="C:cytoplasm"/>
    <property type="evidence" value="ECO:0000314"/>
    <property type="project" value="UniProtKB"/>
</dbReference>
<dbReference type="GO" id="GO:0098591">
    <property type="term" value="C:external side of apical plasma membrane"/>
    <property type="evidence" value="ECO:0000250"/>
    <property type="project" value="ARUK-UCL"/>
</dbReference>
<dbReference type="GO" id="GO:0070062">
    <property type="term" value="C:extracellular exosome"/>
    <property type="evidence" value="ECO:0007005"/>
    <property type="project" value="UniProtKB"/>
</dbReference>
<dbReference type="GO" id="GO:0016020">
    <property type="term" value="C:membrane"/>
    <property type="evidence" value="ECO:0000314"/>
    <property type="project" value="ARUK-UCL"/>
</dbReference>
<dbReference type="GO" id="GO:0005886">
    <property type="term" value="C:plasma membrane"/>
    <property type="evidence" value="ECO:0000314"/>
    <property type="project" value="HPA"/>
</dbReference>
<dbReference type="GO" id="GO:0008559">
    <property type="term" value="F:ABC-type xenobiotic transporter activity"/>
    <property type="evidence" value="ECO:0000314"/>
    <property type="project" value="ARUK-UCL"/>
</dbReference>
<dbReference type="GO" id="GO:0005524">
    <property type="term" value="F:ATP binding"/>
    <property type="evidence" value="ECO:0000314"/>
    <property type="project" value="UniProtKB"/>
</dbReference>
<dbReference type="GO" id="GO:0016887">
    <property type="term" value="F:ATP hydrolysis activity"/>
    <property type="evidence" value="ECO:0007669"/>
    <property type="project" value="InterPro"/>
</dbReference>
<dbReference type="GO" id="GO:0042626">
    <property type="term" value="F:ATPase-coupled transmembrane transporter activity"/>
    <property type="evidence" value="ECO:0000314"/>
    <property type="project" value="ARUK-UCL"/>
</dbReference>
<dbReference type="GO" id="GO:0046943">
    <property type="term" value="F:carboxylic acid transmembrane transporter activity"/>
    <property type="evidence" value="ECO:0000315"/>
    <property type="project" value="ARUK-UCL"/>
</dbReference>
<dbReference type="GO" id="GO:0099038">
    <property type="term" value="F:ceramide floppase activity"/>
    <property type="evidence" value="ECO:0000314"/>
    <property type="project" value="BHF-UCL"/>
</dbReference>
<dbReference type="GO" id="GO:0015562">
    <property type="term" value="F:efflux transmembrane transporter activity"/>
    <property type="evidence" value="ECO:0000314"/>
    <property type="project" value="ARUK-UCL"/>
</dbReference>
<dbReference type="GO" id="GO:0140328">
    <property type="term" value="F:floppase activity"/>
    <property type="evidence" value="ECO:0000315"/>
    <property type="project" value="UniProtKB"/>
</dbReference>
<dbReference type="GO" id="GO:0090554">
    <property type="term" value="F:phosphatidylcholine floppase activity"/>
    <property type="evidence" value="ECO:0000314"/>
    <property type="project" value="BHF-UCL"/>
</dbReference>
<dbReference type="GO" id="GO:0090555">
    <property type="term" value="F:phosphatidylethanolamine flippase activity"/>
    <property type="evidence" value="ECO:0000314"/>
    <property type="project" value="BHF-UCL"/>
</dbReference>
<dbReference type="GO" id="GO:0022857">
    <property type="term" value="F:transmembrane transporter activity"/>
    <property type="evidence" value="ECO:0000250"/>
    <property type="project" value="ARUK-UCL"/>
</dbReference>
<dbReference type="GO" id="GO:0031625">
    <property type="term" value="F:ubiquitin protein ligase binding"/>
    <property type="evidence" value="ECO:0000353"/>
    <property type="project" value="ARUK-UCL"/>
</dbReference>
<dbReference type="GO" id="GO:0042910">
    <property type="term" value="F:xenobiotic transmembrane transporter activity"/>
    <property type="evidence" value="ECO:0000314"/>
    <property type="project" value="ARUK-UCL"/>
</dbReference>
<dbReference type="GO" id="GO:1905039">
    <property type="term" value="P:carboxylic acid transmembrane transport"/>
    <property type="evidence" value="ECO:0000315"/>
    <property type="project" value="ARUK-UCL"/>
</dbReference>
<dbReference type="GO" id="GO:0071475">
    <property type="term" value="P:cellular hyperosmotic salinity response"/>
    <property type="evidence" value="ECO:0007669"/>
    <property type="project" value="Ensembl"/>
</dbReference>
<dbReference type="GO" id="GO:0071312">
    <property type="term" value="P:cellular response to alkaloid"/>
    <property type="evidence" value="ECO:0007669"/>
    <property type="project" value="Ensembl"/>
</dbReference>
<dbReference type="GO" id="GO:0071236">
    <property type="term" value="P:cellular response to antibiotic"/>
    <property type="evidence" value="ECO:0007669"/>
    <property type="project" value="Ensembl"/>
</dbReference>
<dbReference type="GO" id="GO:1905231">
    <property type="term" value="P:cellular response to borneol"/>
    <property type="evidence" value="ECO:0007669"/>
    <property type="project" value="Ensembl"/>
</dbReference>
<dbReference type="GO" id="GO:0071549">
    <property type="term" value="P:cellular response to dexamethasone stimulus"/>
    <property type="evidence" value="ECO:0007669"/>
    <property type="project" value="Ensembl"/>
</dbReference>
<dbReference type="GO" id="GO:0071392">
    <property type="term" value="P:cellular response to estradiol stimulus"/>
    <property type="evidence" value="ECO:0007669"/>
    <property type="project" value="Ensembl"/>
</dbReference>
<dbReference type="GO" id="GO:0071217">
    <property type="term" value="P:cellular response to external biotic stimulus"/>
    <property type="evidence" value="ECO:0007669"/>
    <property type="project" value="Ensembl"/>
</dbReference>
<dbReference type="GO" id="GO:1905232">
    <property type="term" value="P:cellular response to L-glutamate"/>
    <property type="evidence" value="ECO:0007669"/>
    <property type="project" value="Ensembl"/>
</dbReference>
<dbReference type="GO" id="GO:0071222">
    <property type="term" value="P:cellular response to lipopolysaccharide"/>
    <property type="evidence" value="ECO:0007669"/>
    <property type="project" value="Ensembl"/>
</dbReference>
<dbReference type="GO" id="GO:0036146">
    <property type="term" value="P:cellular response to mycotoxin"/>
    <property type="evidence" value="ECO:0007669"/>
    <property type="project" value="Ensembl"/>
</dbReference>
<dbReference type="GO" id="GO:1904148">
    <property type="term" value="P:cellular response to nonylphenol"/>
    <property type="evidence" value="ECO:0007669"/>
    <property type="project" value="Ensembl"/>
</dbReference>
<dbReference type="GO" id="GO:0071356">
    <property type="term" value="P:cellular response to tumor necrosis factor"/>
    <property type="evidence" value="ECO:0007669"/>
    <property type="project" value="Ensembl"/>
</dbReference>
<dbReference type="GO" id="GO:0099040">
    <property type="term" value="P:ceramide translocation"/>
    <property type="evidence" value="ECO:0000314"/>
    <property type="project" value="BHF-UCL"/>
</dbReference>
<dbReference type="GO" id="GO:0007623">
    <property type="term" value="P:circadian rhythm"/>
    <property type="evidence" value="ECO:0007669"/>
    <property type="project" value="Ensembl"/>
</dbReference>
<dbReference type="GO" id="GO:0043215">
    <property type="term" value="P:daunorubicin transport"/>
    <property type="evidence" value="ECO:0007669"/>
    <property type="project" value="Ensembl"/>
</dbReference>
<dbReference type="GO" id="GO:0060856">
    <property type="term" value="P:establishment of blood-brain barrier"/>
    <property type="evidence" value="ECO:0007669"/>
    <property type="project" value="Ensembl"/>
</dbReference>
<dbReference type="GO" id="GO:1990963">
    <property type="term" value="P:establishment of blood-retinal barrier"/>
    <property type="evidence" value="ECO:0007669"/>
    <property type="project" value="Ensembl"/>
</dbReference>
<dbReference type="GO" id="GO:0140115">
    <property type="term" value="P:export across plasma membrane"/>
    <property type="evidence" value="ECO:0000314"/>
    <property type="project" value="ARUK-UCL"/>
</dbReference>
<dbReference type="GO" id="GO:0007565">
    <property type="term" value="P:female pregnancy"/>
    <property type="evidence" value="ECO:0007669"/>
    <property type="project" value="Ensembl"/>
</dbReference>
<dbReference type="GO" id="GO:0000086">
    <property type="term" value="P:G2/M transition of mitotic cell cycle"/>
    <property type="evidence" value="ECO:0000314"/>
    <property type="project" value="DFLAT"/>
</dbReference>
<dbReference type="GO" id="GO:0009914">
    <property type="term" value="P:hormone transport"/>
    <property type="evidence" value="ECO:0007669"/>
    <property type="project" value="Ensembl"/>
</dbReference>
<dbReference type="GO" id="GO:0050892">
    <property type="term" value="P:intestinal absorption"/>
    <property type="evidence" value="ECO:0007669"/>
    <property type="project" value="Ensembl"/>
</dbReference>
<dbReference type="GO" id="GO:0007595">
    <property type="term" value="P:lactation"/>
    <property type="evidence" value="ECO:0007669"/>
    <property type="project" value="Ensembl"/>
</dbReference>
<dbReference type="GO" id="GO:0035633">
    <property type="term" value="P:maintenance of blood-brain barrier"/>
    <property type="evidence" value="ECO:0007669"/>
    <property type="project" value="Ensembl"/>
</dbReference>
<dbReference type="GO" id="GO:1904057">
    <property type="term" value="P:negative regulation of sensory perception of pain"/>
    <property type="evidence" value="ECO:0007669"/>
    <property type="project" value="Ensembl"/>
</dbReference>
<dbReference type="GO" id="GO:0045332">
    <property type="term" value="P:phospholipid translocation"/>
    <property type="evidence" value="ECO:0000314"/>
    <property type="project" value="BHF-UCL"/>
</dbReference>
<dbReference type="GO" id="GO:0001890">
    <property type="term" value="P:placenta development"/>
    <property type="evidence" value="ECO:0007669"/>
    <property type="project" value="Ensembl"/>
</dbReference>
<dbReference type="GO" id="GO:1904446">
    <property type="term" value="P:positive regulation of establishment of Sertoli cell barrier"/>
    <property type="evidence" value="ECO:0007669"/>
    <property type="project" value="Ensembl"/>
</dbReference>
<dbReference type="GO" id="GO:2001025">
    <property type="term" value="P:positive regulation of response to drug"/>
    <property type="evidence" value="ECO:0007669"/>
    <property type="project" value="Ensembl"/>
</dbReference>
<dbReference type="GO" id="GO:1902396">
    <property type="term" value="P:protein localization to bicellular tight junction"/>
    <property type="evidence" value="ECO:0007669"/>
    <property type="project" value="Ensembl"/>
</dbReference>
<dbReference type="GO" id="GO:2001225">
    <property type="term" value="P:regulation of chloride transport"/>
    <property type="evidence" value="ECO:0000315"/>
    <property type="project" value="CAFA"/>
</dbReference>
<dbReference type="GO" id="GO:1904478">
    <property type="term" value="P:regulation of intestinal absorption"/>
    <property type="evidence" value="ECO:0007669"/>
    <property type="project" value="Ensembl"/>
</dbReference>
<dbReference type="GO" id="GO:0097305">
    <property type="term" value="P:response to alcohol"/>
    <property type="evidence" value="ECO:0007669"/>
    <property type="project" value="Ensembl"/>
</dbReference>
<dbReference type="GO" id="GO:0097327">
    <property type="term" value="P:response to antineoplastic agent"/>
    <property type="evidence" value="ECO:0007669"/>
    <property type="project" value="Ensembl"/>
</dbReference>
<dbReference type="GO" id="GO:0046686">
    <property type="term" value="P:response to cadmium ion"/>
    <property type="evidence" value="ECO:0007669"/>
    <property type="project" value="Ensembl"/>
</dbReference>
<dbReference type="GO" id="GO:1905233">
    <property type="term" value="P:response to codeine"/>
    <property type="evidence" value="ECO:0007669"/>
    <property type="project" value="Ensembl"/>
</dbReference>
<dbReference type="GO" id="GO:1905237">
    <property type="term" value="P:response to cyclosporin A"/>
    <property type="evidence" value="ECO:0007669"/>
    <property type="project" value="Ensembl"/>
</dbReference>
<dbReference type="GO" id="GO:0033762">
    <property type="term" value="P:response to glucagon"/>
    <property type="evidence" value="ECO:0007669"/>
    <property type="project" value="Ensembl"/>
</dbReference>
<dbReference type="GO" id="GO:1903416">
    <property type="term" value="P:response to glycoside"/>
    <property type="evidence" value="ECO:0007669"/>
    <property type="project" value="Ensembl"/>
</dbReference>
<dbReference type="GO" id="GO:0001666">
    <property type="term" value="P:response to hypoxia"/>
    <property type="evidence" value="ECO:0007669"/>
    <property type="project" value="Ensembl"/>
</dbReference>
<dbReference type="GO" id="GO:0032570">
    <property type="term" value="P:response to progesterone"/>
    <property type="evidence" value="ECO:0007669"/>
    <property type="project" value="Ensembl"/>
</dbReference>
<dbReference type="GO" id="GO:1905235">
    <property type="term" value="P:response to quercetin"/>
    <property type="evidence" value="ECO:0007669"/>
    <property type="project" value="Ensembl"/>
</dbReference>
<dbReference type="GO" id="GO:0097068">
    <property type="term" value="P:response to thyroxine"/>
    <property type="evidence" value="ECO:0007669"/>
    <property type="project" value="Ensembl"/>
</dbReference>
<dbReference type="GO" id="GO:0033189">
    <property type="term" value="P:response to vitamin A"/>
    <property type="evidence" value="ECO:0007669"/>
    <property type="project" value="Ensembl"/>
</dbReference>
<dbReference type="GO" id="GO:0033280">
    <property type="term" value="P:response to vitamin D"/>
    <property type="evidence" value="ECO:0007669"/>
    <property type="project" value="Ensembl"/>
</dbReference>
<dbReference type="GO" id="GO:0009410">
    <property type="term" value="P:response to xenobiotic stimulus"/>
    <property type="evidence" value="ECO:0000304"/>
    <property type="project" value="ProtInc"/>
</dbReference>
<dbReference type="GO" id="GO:0072089">
    <property type="term" value="P:stem cell proliferation"/>
    <property type="evidence" value="ECO:0000315"/>
    <property type="project" value="DFLAT"/>
</dbReference>
<dbReference type="GO" id="GO:0046865">
    <property type="term" value="P:terpenoid transport"/>
    <property type="evidence" value="ECO:0000250"/>
    <property type="project" value="ARUK-UCL"/>
</dbReference>
<dbReference type="GO" id="GO:0070633">
    <property type="term" value="P:transepithelial transport"/>
    <property type="evidence" value="ECO:0000314"/>
    <property type="project" value="ARUK-UCL"/>
</dbReference>
<dbReference type="GO" id="GO:0055085">
    <property type="term" value="P:transmembrane transport"/>
    <property type="evidence" value="ECO:0000304"/>
    <property type="project" value="Reactome"/>
</dbReference>
<dbReference type="GO" id="GO:0150104">
    <property type="term" value="P:transport across blood-brain barrier"/>
    <property type="evidence" value="ECO:0000303"/>
    <property type="project" value="ARUK-UCL"/>
</dbReference>
<dbReference type="GO" id="GO:1990961">
    <property type="term" value="P:xenobiotic detoxification by transmembrane export across the plasma membrane"/>
    <property type="evidence" value="ECO:0000314"/>
    <property type="project" value="ARUK-UCL"/>
</dbReference>
<dbReference type="GO" id="GO:0006805">
    <property type="term" value="P:xenobiotic metabolic process"/>
    <property type="evidence" value="ECO:0000304"/>
    <property type="project" value="Reactome"/>
</dbReference>
<dbReference type="GO" id="GO:1990962">
    <property type="term" value="P:xenobiotic transport across blood-brain barrier"/>
    <property type="evidence" value="ECO:0000315"/>
    <property type="project" value="ARUK-UCL"/>
</dbReference>
<dbReference type="CDD" id="cd18558">
    <property type="entry name" value="ABC_6TM_Pgp_ABCB1"/>
    <property type="match status" value="1"/>
</dbReference>
<dbReference type="CDD" id="cd18578">
    <property type="entry name" value="ABC_6TM_Pgp_ABCB1_D2_like"/>
    <property type="match status" value="1"/>
</dbReference>
<dbReference type="CDD" id="cd03249">
    <property type="entry name" value="ABC_MTABC3_MDL1_MDL2"/>
    <property type="match status" value="2"/>
</dbReference>
<dbReference type="FunFam" id="1.20.1560.10:FF:000187">
    <property type="entry name" value="ATP binding cassette subfamily B member 1"/>
    <property type="match status" value="1"/>
</dbReference>
<dbReference type="FunFam" id="1.20.1560.10:FF:000043">
    <property type="entry name" value="Multidrug resistance protein 1A"/>
    <property type="match status" value="2"/>
</dbReference>
<dbReference type="FunFam" id="3.40.50.300:FF:000479">
    <property type="entry name" value="Multidrug resistance protein 1A"/>
    <property type="match status" value="2"/>
</dbReference>
<dbReference type="Gene3D" id="1.20.1560.10">
    <property type="entry name" value="ABC transporter type 1, transmembrane domain"/>
    <property type="match status" value="1"/>
</dbReference>
<dbReference type="Gene3D" id="3.40.50.300">
    <property type="entry name" value="P-loop containing nucleotide triphosphate hydrolases"/>
    <property type="match status" value="2"/>
</dbReference>
<dbReference type="InterPro" id="IPR003593">
    <property type="entry name" value="AAA+_ATPase"/>
</dbReference>
<dbReference type="InterPro" id="IPR011527">
    <property type="entry name" value="ABC1_TM_dom"/>
</dbReference>
<dbReference type="InterPro" id="IPR036640">
    <property type="entry name" value="ABC1_TM_sf"/>
</dbReference>
<dbReference type="InterPro" id="IPR003439">
    <property type="entry name" value="ABC_transporter-like_ATP-bd"/>
</dbReference>
<dbReference type="InterPro" id="IPR017871">
    <property type="entry name" value="ABC_transporter-like_CS"/>
</dbReference>
<dbReference type="InterPro" id="IPR027417">
    <property type="entry name" value="P-loop_NTPase"/>
</dbReference>
<dbReference type="InterPro" id="IPR039421">
    <property type="entry name" value="Type_1_exporter"/>
</dbReference>
<dbReference type="PANTHER" id="PTHR43394:SF28">
    <property type="entry name" value="ATP-BINDING CASSETTE SUBFAMILY B MEMBER 1"/>
    <property type="match status" value="1"/>
</dbReference>
<dbReference type="PANTHER" id="PTHR43394">
    <property type="entry name" value="ATP-DEPENDENT PERMEASE MDL1, MITOCHONDRIAL"/>
    <property type="match status" value="1"/>
</dbReference>
<dbReference type="Pfam" id="PF00664">
    <property type="entry name" value="ABC_membrane"/>
    <property type="match status" value="2"/>
</dbReference>
<dbReference type="Pfam" id="PF00005">
    <property type="entry name" value="ABC_tran"/>
    <property type="match status" value="2"/>
</dbReference>
<dbReference type="SMART" id="SM00382">
    <property type="entry name" value="AAA"/>
    <property type="match status" value="2"/>
</dbReference>
<dbReference type="SUPFAM" id="SSF90123">
    <property type="entry name" value="ABC transporter transmembrane region"/>
    <property type="match status" value="2"/>
</dbReference>
<dbReference type="SUPFAM" id="SSF52540">
    <property type="entry name" value="P-loop containing nucleoside triphosphate hydrolases"/>
    <property type="match status" value="2"/>
</dbReference>
<dbReference type="PROSITE" id="PS50929">
    <property type="entry name" value="ABC_TM1F"/>
    <property type="match status" value="2"/>
</dbReference>
<dbReference type="PROSITE" id="PS00211">
    <property type="entry name" value="ABC_TRANSPORTER_1"/>
    <property type="match status" value="2"/>
</dbReference>
<dbReference type="PROSITE" id="PS50893">
    <property type="entry name" value="ABC_TRANSPORTER_2"/>
    <property type="match status" value="2"/>
</dbReference>
<comment type="function">
    <text evidence="21 24 25 26 27">Translocates drugs and phospholipids across the membrane (PubMed:2897240, PubMed:35970996, PubMed:8898203, PubMed:9038218, PubMed:35507548). Catalyzes the flop of phospholipids from the cytoplasmic to the exoplasmic leaflet of the apical membrane. Participates mainly to the flop of phosphatidylcholine, phosphatidylethanolamine, beta-D-glucosylceramides and sphingomyelins (PubMed:8898203). Energy-dependent efflux pump responsible for decreased drug accumulation in multidrug-resistant cells (PubMed:2897240, PubMed:35970996, PubMed:9038218).</text>
</comment>
<comment type="catalytic activity">
    <reaction evidence="24 27">
        <text>ATP + H2O + xenobioticSide 1 = ADP + phosphate + xenobioticSide 2.</text>
        <dbReference type="EC" id="7.6.2.2"/>
    </reaction>
</comment>
<comment type="catalytic activity">
    <reaction evidence="26">
        <text>ATP + H2O + phospholipidSide 1 = ADP + phosphate + phospholipidSide 2.</text>
        <dbReference type="EC" id="7.6.2.1"/>
    </reaction>
</comment>
<comment type="catalytic activity">
    <reaction evidence="26">
        <text>a 1,2-diacyl-sn-glycero-3-phosphoethanolamine(in) + ATP + H2O = a 1,2-diacyl-sn-glycero-3-phosphoethanolamine(out) + ADP + phosphate + H(+)</text>
        <dbReference type="Rhea" id="RHEA:36439"/>
        <dbReference type="ChEBI" id="CHEBI:15377"/>
        <dbReference type="ChEBI" id="CHEBI:15378"/>
        <dbReference type="ChEBI" id="CHEBI:30616"/>
        <dbReference type="ChEBI" id="CHEBI:43474"/>
        <dbReference type="ChEBI" id="CHEBI:64612"/>
        <dbReference type="ChEBI" id="CHEBI:456216"/>
    </reaction>
</comment>
<comment type="catalytic activity">
    <reaction evidence="26">
        <text>a 1,2-diacyl-sn-glycero-3-phosphocholine(out) + ATP + H2O = a 1,2-diacyl-sn-glycero-3-phosphocholine(in) + ADP + phosphate + H(+)</text>
        <dbReference type="Rhea" id="RHEA:38583"/>
        <dbReference type="ChEBI" id="CHEBI:15377"/>
        <dbReference type="ChEBI" id="CHEBI:15378"/>
        <dbReference type="ChEBI" id="CHEBI:30616"/>
        <dbReference type="ChEBI" id="CHEBI:43474"/>
        <dbReference type="ChEBI" id="CHEBI:57643"/>
        <dbReference type="ChEBI" id="CHEBI:456216"/>
    </reaction>
</comment>
<comment type="catalytic activity">
    <reaction evidence="26">
        <text>a beta-D-glucosyl-(1&lt;-&gt;1')-N-acylsphing-4-enine(in) + ATP + H2O = a beta-D-glucosyl-(1&lt;-&gt;1')-N-acylsphing-4-enine(out) + ADP + phosphate + H(+)</text>
        <dbReference type="Rhea" id="RHEA:38943"/>
        <dbReference type="ChEBI" id="CHEBI:15377"/>
        <dbReference type="ChEBI" id="CHEBI:15378"/>
        <dbReference type="ChEBI" id="CHEBI:22801"/>
        <dbReference type="ChEBI" id="CHEBI:30616"/>
        <dbReference type="ChEBI" id="CHEBI:43474"/>
        <dbReference type="ChEBI" id="CHEBI:456216"/>
    </reaction>
</comment>
<comment type="catalytic activity">
    <reaction evidence="26">
        <text>a sphingomyelin(in) + ATP + H2O = a sphingomyelin(out) + ADP + phosphate + H(+)</text>
        <dbReference type="Rhea" id="RHEA:38903"/>
        <dbReference type="ChEBI" id="CHEBI:15377"/>
        <dbReference type="ChEBI" id="CHEBI:15378"/>
        <dbReference type="ChEBI" id="CHEBI:17636"/>
        <dbReference type="ChEBI" id="CHEBI:30616"/>
        <dbReference type="ChEBI" id="CHEBI:43474"/>
        <dbReference type="ChEBI" id="CHEBI:456216"/>
    </reaction>
</comment>
<comment type="activity regulation">
    <text evidence="24 25 26">Translocase activity is inhibited by verapamil and is sensitive to energy depletion (PubMed:35507548, PubMed:8898203). Inhibited by nicardipine (PubMed:35507548). Inhibited by PSC833 (PubMed:35507548). Inhibited by vanadate (PubMed:35507548). C1orf115 regulates drug efflux through modulation of ABCB1 localization and activity (PubMed:35970996). Not inhibited by amantadine (PubMed:35507548).</text>
</comment>
<comment type="subunit">
    <text evidence="13 18">Interacts with PSMB5. Finds in a complex with ABCB1, TFPI2 and PPP2R3C; leading to the dephosphorylation of ABCB1.</text>
</comment>
<comment type="interaction">
    <interactant intactId="EBI-1057359">
        <id>P08183</id>
    </interactant>
    <interactant intactId="EBI-3267258">
        <id>Q86VI4</id>
        <label>LAPTM4B</label>
    </interactant>
    <organismsDiffer>false</organismsDiffer>
    <experiments>2</experiments>
</comment>
<comment type="interaction">
    <interactant intactId="EBI-1057359">
        <id>P08183</id>
    </interactant>
    <interactant intactId="EBI-722416">
        <id>Q99496</id>
        <label>RNF2</label>
    </interactant>
    <organismsDiffer>false</organismsDiffer>
    <experiments>2</experiments>
</comment>
<comment type="subcellular location">
    <subcellularLocation>
        <location evidence="25">Cell membrane</location>
        <topology evidence="5">Multi-pass membrane protein</topology>
    </subcellularLocation>
    <subcellularLocation>
        <location evidence="19 26">Apical cell membrane</location>
    </subcellularLocation>
    <subcellularLocation>
        <location evidence="25">Cytoplasm</location>
    </subcellularLocation>
    <text evidence="19 25">ABCB1 localization is influenced by C1orf115 expression levels (plasma membrane versus cytoplasm). Localized to the apical membrane of enterocytes (PubMed:28408210).</text>
</comment>
<comment type="alternative products">
    <event type="alternative splicing"/>
    <isoform>
        <id>P08183-1</id>
        <name>1</name>
        <sequence type="displayed"/>
    </isoform>
    <isoform>
        <id>P08183-2</id>
        <name>2</name>
        <sequence type="described" ref="VSP_055769"/>
    </isoform>
</comment>
<comment type="tissue specificity">
    <text evidence="19">Expressed in small intestine (PubMed:28408210). Expressed in liver, kidney and brain.</text>
</comment>
<comment type="polymorphism">
    <text evidence="20 21 27">Genetic variation in ABCB1 may play a role in patients who do not respond to drug treatment.</text>
</comment>
<comment type="disease">
    <disease id="DI-02657">
        <name>Inflammatory bowel disease 13</name>
        <acronym>IBD13</acronym>
        <description>A chronic, relapsing inflammation of the gastrointestinal tract with a complex etiology. It is subdivided into Crohn disease and ulcerative colitis phenotypes. Crohn disease may affect any part of the gastrointestinal tract from the mouth to the anus, but most frequently it involves the terminal ileum and colon. Bowel inflammation is transmural and discontinuous; it may contain granulomas or be associated with intestinal or perianal fistulas. In contrast, in ulcerative colitis, the inflammation is continuous and limited to rectal and colonic mucosal layers; fistulas and granulomas are not observed. Both diseases include extraintestinal inflammation of the skin, eyes, or joints.</description>
        <dbReference type="MIM" id="612244"/>
    </disease>
    <text>Disease susceptibility is associated with variants affecting the gene represented in this entry.</text>
</comment>
<comment type="disease" evidence="22 23">
    <disease id="DI-06943">
        <name>Encephalopathy, acute transient</name>
        <acronym>ENPAT</acronym>
        <description>An autosomal recessive neurologic disorder triggered by specific drugs, or acute febrile or afebrile illness. Clinical features include encephalopathy, ataxia, spasticity, pyramidal signs, diplopia, vomiting, and coma. Symptoms fully resolve within few days.</description>
        <dbReference type="MIM" id="620950"/>
    </disease>
    <text>The disease is caused by variants affecting the gene represented in this entry.</text>
</comment>
<comment type="similarity">
    <text evidence="31">Belongs to the ABC transporter superfamily. ABCB family. Multidrug resistance exporter (TC 3.A.1.201) subfamily.</text>
</comment>
<comment type="sequence caution" evidence="31">
    <conflict type="erroneous gene model prediction">
        <sequence resource="EMBL-CDS" id="AAM49149"/>
    </conflict>
</comment>
<comment type="online information" name="Atlas of Genetics and Cytogenetics in Oncology and Haematology">
    <link uri="https://atlasgeneticsoncology.org/gene/105/abcb1"/>
</comment>
<comment type="online information" name="Wikipedia">
    <link uri="https://en.wikipedia.org/wiki/P-glycoprotein"/>
    <text>P-glycoprotein entry</text>
</comment>
<comment type="online information" name="ABCMdb">
    <link uri="http://abcm2.hegelab.org/search"/>
    <text>Database for mutations in ABC proteins</text>
</comment>
<protein>
    <recommendedName>
        <fullName evidence="31">ATP-dependent translocase ABCB1</fullName>
    </recommendedName>
    <alternativeName>
        <fullName evidence="31">ATP-binding cassette sub-family B member 1</fullName>
    </alternativeName>
    <alternativeName>
        <fullName>Multidrug resistance protein 1</fullName>
        <ecNumber evidence="24 27">7.6.2.2</ecNumber>
    </alternativeName>
    <alternativeName>
        <fullName>P-glycoprotein 1</fullName>
    </alternativeName>
    <alternativeName>
        <fullName evidence="31">Phospholipid transporter ABCB1</fullName>
        <ecNumber evidence="26">7.6.2.1</ecNumber>
    </alternativeName>
    <cdAntigenName>CD243</cdAntigenName>
</protein>
<reference key="1">
    <citation type="journal article" date="1986" name="Cell">
        <title>Internal duplication and homology with bacterial transport proteins in the mdr1 (P-glycoprotein) gene from multidrug-resistant human cells.</title>
        <authorList>
            <person name="Chen C.-J."/>
            <person name="Chin J.E."/>
            <person name="Ueda K."/>
            <person name="Clark D.P."/>
            <person name="Pastan I."/>
            <person name="Gottesman M.M."/>
            <person name="Roninson I.B."/>
        </authorList>
    </citation>
    <scope>NUCLEOTIDE SEQUENCE [MRNA] (ISOFORM 1)</scope>
    <scope>VARIANTS VAL-185 AND ALA-893</scope>
    <scope>POLYMORPHISM</scope>
</reference>
<reference key="2">
    <citation type="journal article" date="1990" name="J. Biol. Chem.">
        <title>Genomic organization of the human multidrug resistance (MDR1) gene and origin of P-glycoproteins.</title>
        <authorList>
            <person name="Chen C.-J."/>
            <person name="Clark D.P."/>
            <person name="Ueda K."/>
            <person name="Pastan I."/>
            <person name="Gottesman M.M."/>
            <person name="Roninson I.B."/>
        </authorList>
    </citation>
    <scope>NUCLEOTIDE SEQUENCE [GENOMIC DNA]</scope>
    <scope>VARIANT ALA-893</scope>
</reference>
<reference key="3">
    <citation type="journal article" date="1997" name="J. Biol. Chem.">
        <title>Multidrug-resistant human sarcoma cells with a mutant P-glycoprotein, altered phenotype, and resistance to cyclosporins.</title>
        <authorList>
            <person name="Chen G."/>
            <person name="Duran G.E."/>
            <person name="Steger K.A."/>
            <person name="Lacayo N.J."/>
            <person name="Jaffrezou J.P."/>
            <person name="Dumontet C."/>
            <person name="Sikic B.I."/>
        </authorList>
    </citation>
    <scope>NUCLEOTIDE SEQUENCE [MRNA] (ISOFORM 1)</scope>
    <scope>VARIANTS VAL-185 AND ALA-893</scope>
    <scope>POLYMORPHISM</scope>
    <scope>FUNCTION</scope>
</reference>
<reference key="4">
    <citation type="submission" date="2008-06" db="EMBL/GenBank/DDBJ databases">
        <title>Cloning of P-glycoprotein cDNA sequence from breast cancer MCF7 cell line.</title>
        <authorList>
            <person name="Jiang Y."/>
            <person name="Sun Q."/>
            <person name="Xie Z."/>
            <person name="Liu F."/>
            <person name="Xu W."/>
            <person name="Wang Y."/>
        </authorList>
    </citation>
    <scope>NUCLEOTIDE SEQUENCE [MRNA] (ISOFORM 2)</scope>
</reference>
<reference key="5">
    <citation type="submission" date="2005-01" db="EMBL/GenBank/DDBJ databases">
        <authorList>
            <consortium name="NIEHS SNPs program"/>
        </authorList>
    </citation>
    <scope>NUCLEOTIDE SEQUENCE [GENOMIC DNA]</scope>
    <scope>VARIANTS LEU-17; ASP-21; ASN-400; LYS-566; CYS-593; VAL-836; ALA-893; ALA-1051; THR-1141 AND ILE-1251</scope>
</reference>
<reference key="6">
    <citation type="journal article" date="2004" name="Nat. Genet.">
        <title>Complete sequencing and characterization of 21,243 full-length human cDNAs.</title>
        <authorList>
            <person name="Ota T."/>
            <person name="Suzuki Y."/>
            <person name="Nishikawa T."/>
            <person name="Otsuki T."/>
            <person name="Sugiyama T."/>
            <person name="Irie R."/>
            <person name="Wakamatsu A."/>
            <person name="Hayashi K."/>
            <person name="Sato H."/>
            <person name="Nagai K."/>
            <person name="Kimura K."/>
            <person name="Makita H."/>
            <person name="Sekine M."/>
            <person name="Obayashi M."/>
            <person name="Nishi T."/>
            <person name="Shibahara T."/>
            <person name="Tanaka T."/>
            <person name="Ishii S."/>
            <person name="Yamamoto J."/>
            <person name="Saito K."/>
            <person name="Kawai Y."/>
            <person name="Isono Y."/>
            <person name="Nakamura Y."/>
            <person name="Nagahari K."/>
            <person name="Murakami K."/>
            <person name="Yasuda T."/>
            <person name="Iwayanagi T."/>
            <person name="Wagatsuma M."/>
            <person name="Shiratori A."/>
            <person name="Sudo H."/>
            <person name="Hosoiri T."/>
            <person name="Kaku Y."/>
            <person name="Kodaira H."/>
            <person name="Kondo H."/>
            <person name="Sugawara M."/>
            <person name="Takahashi M."/>
            <person name="Kanda K."/>
            <person name="Yokoi T."/>
            <person name="Furuya T."/>
            <person name="Kikkawa E."/>
            <person name="Omura Y."/>
            <person name="Abe K."/>
            <person name="Kamihara K."/>
            <person name="Katsuta N."/>
            <person name="Sato K."/>
            <person name="Tanikawa M."/>
            <person name="Yamazaki M."/>
            <person name="Ninomiya K."/>
            <person name="Ishibashi T."/>
            <person name="Yamashita H."/>
            <person name="Murakawa K."/>
            <person name="Fujimori K."/>
            <person name="Tanai H."/>
            <person name="Kimata M."/>
            <person name="Watanabe M."/>
            <person name="Hiraoka S."/>
            <person name="Chiba Y."/>
            <person name="Ishida S."/>
            <person name="Ono Y."/>
            <person name="Takiguchi S."/>
            <person name="Watanabe S."/>
            <person name="Yosida M."/>
            <person name="Hotuta T."/>
            <person name="Kusano J."/>
            <person name="Kanehori K."/>
            <person name="Takahashi-Fujii A."/>
            <person name="Hara H."/>
            <person name="Tanase T.-O."/>
            <person name="Nomura Y."/>
            <person name="Togiya S."/>
            <person name="Komai F."/>
            <person name="Hara R."/>
            <person name="Takeuchi K."/>
            <person name="Arita M."/>
            <person name="Imose N."/>
            <person name="Musashino K."/>
            <person name="Yuuki H."/>
            <person name="Oshima A."/>
            <person name="Sasaki N."/>
            <person name="Aotsuka S."/>
            <person name="Yoshikawa Y."/>
            <person name="Matsunawa H."/>
            <person name="Ichihara T."/>
            <person name="Shiohata N."/>
            <person name="Sano S."/>
            <person name="Moriya S."/>
            <person name="Momiyama H."/>
            <person name="Satoh N."/>
            <person name="Takami S."/>
            <person name="Terashima Y."/>
            <person name="Suzuki O."/>
            <person name="Nakagawa S."/>
            <person name="Senoh A."/>
            <person name="Mizoguchi H."/>
            <person name="Goto Y."/>
            <person name="Shimizu F."/>
            <person name="Wakebe H."/>
            <person name="Hishigaki H."/>
            <person name="Watanabe T."/>
            <person name="Sugiyama A."/>
            <person name="Takemoto M."/>
            <person name="Kawakami B."/>
            <person name="Yamazaki M."/>
            <person name="Watanabe K."/>
            <person name="Kumagai A."/>
            <person name="Itakura S."/>
            <person name="Fukuzumi Y."/>
            <person name="Fujimori Y."/>
            <person name="Komiyama M."/>
            <person name="Tashiro H."/>
            <person name="Tanigami A."/>
            <person name="Fujiwara T."/>
            <person name="Ono T."/>
            <person name="Yamada K."/>
            <person name="Fujii Y."/>
            <person name="Ozaki K."/>
            <person name="Hirao M."/>
            <person name="Ohmori Y."/>
            <person name="Kawabata A."/>
            <person name="Hikiji T."/>
            <person name="Kobatake N."/>
            <person name="Inagaki H."/>
            <person name="Ikema Y."/>
            <person name="Okamoto S."/>
            <person name="Okitani R."/>
            <person name="Kawakami T."/>
            <person name="Noguchi S."/>
            <person name="Itoh T."/>
            <person name="Shigeta K."/>
            <person name="Senba T."/>
            <person name="Matsumura K."/>
            <person name="Nakajima Y."/>
            <person name="Mizuno T."/>
            <person name="Morinaga M."/>
            <person name="Sasaki M."/>
            <person name="Togashi T."/>
            <person name="Oyama M."/>
            <person name="Hata H."/>
            <person name="Watanabe M."/>
            <person name="Komatsu T."/>
            <person name="Mizushima-Sugano J."/>
            <person name="Satoh T."/>
            <person name="Shirai Y."/>
            <person name="Takahashi Y."/>
            <person name="Nakagawa K."/>
            <person name="Okumura K."/>
            <person name="Nagase T."/>
            <person name="Nomura N."/>
            <person name="Kikuchi H."/>
            <person name="Masuho Y."/>
            <person name="Yamashita R."/>
            <person name="Nakai K."/>
            <person name="Yada T."/>
            <person name="Nakamura Y."/>
            <person name="Ohara O."/>
            <person name="Isogai T."/>
            <person name="Sugano S."/>
        </authorList>
    </citation>
    <scope>NUCLEOTIDE SEQUENCE [LARGE SCALE MRNA] (ISOFORM 1)</scope>
    <scope>VARIANT ASP-21</scope>
    <source>
        <tissue>Thalamus</tissue>
    </source>
</reference>
<reference key="7">
    <citation type="journal article" date="2003" name="Nature">
        <title>The DNA sequence of human chromosome 7.</title>
        <authorList>
            <person name="Hillier L.W."/>
            <person name="Fulton R.S."/>
            <person name="Fulton L.A."/>
            <person name="Graves T.A."/>
            <person name="Pepin K.H."/>
            <person name="Wagner-McPherson C."/>
            <person name="Layman D."/>
            <person name="Maas J."/>
            <person name="Jaeger S."/>
            <person name="Walker R."/>
            <person name="Wylie K."/>
            <person name="Sekhon M."/>
            <person name="Becker M.C."/>
            <person name="O'Laughlin M.D."/>
            <person name="Schaller M.E."/>
            <person name="Fewell G.A."/>
            <person name="Delehaunty K.D."/>
            <person name="Miner T.L."/>
            <person name="Nash W.E."/>
            <person name="Cordes M."/>
            <person name="Du H."/>
            <person name="Sun H."/>
            <person name="Edwards J."/>
            <person name="Bradshaw-Cordum H."/>
            <person name="Ali J."/>
            <person name="Andrews S."/>
            <person name="Isak A."/>
            <person name="Vanbrunt A."/>
            <person name="Nguyen C."/>
            <person name="Du F."/>
            <person name="Lamar B."/>
            <person name="Courtney L."/>
            <person name="Kalicki J."/>
            <person name="Ozersky P."/>
            <person name="Bielicki L."/>
            <person name="Scott K."/>
            <person name="Holmes A."/>
            <person name="Harkins R."/>
            <person name="Harris A."/>
            <person name="Strong C.M."/>
            <person name="Hou S."/>
            <person name="Tomlinson C."/>
            <person name="Dauphin-Kohlberg S."/>
            <person name="Kozlowicz-Reilly A."/>
            <person name="Leonard S."/>
            <person name="Rohlfing T."/>
            <person name="Rock S.M."/>
            <person name="Tin-Wollam A.-M."/>
            <person name="Abbott A."/>
            <person name="Minx P."/>
            <person name="Maupin R."/>
            <person name="Strowmatt C."/>
            <person name="Latreille P."/>
            <person name="Miller N."/>
            <person name="Johnson D."/>
            <person name="Murray J."/>
            <person name="Woessner J.P."/>
            <person name="Wendl M.C."/>
            <person name="Yang S.-P."/>
            <person name="Schultz B.R."/>
            <person name="Wallis J.W."/>
            <person name="Spieth J."/>
            <person name="Bieri T.A."/>
            <person name="Nelson J.O."/>
            <person name="Berkowicz N."/>
            <person name="Wohldmann P.E."/>
            <person name="Cook L.L."/>
            <person name="Hickenbotham M.T."/>
            <person name="Eldred J."/>
            <person name="Williams D."/>
            <person name="Bedell J.A."/>
            <person name="Mardis E.R."/>
            <person name="Clifton S.W."/>
            <person name="Chissoe S.L."/>
            <person name="Marra M.A."/>
            <person name="Raymond C."/>
            <person name="Haugen E."/>
            <person name="Gillett W."/>
            <person name="Zhou Y."/>
            <person name="James R."/>
            <person name="Phelps K."/>
            <person name="Iadanoto S."/>
            <person name="Bubb K."/>
            <person name="Simms E."/>
            <person name="Levy R."/>
            <person name="Clendenning J."/>
            <person name="Kaul R."/>
            <person name="Kent W.J."/>
            <person name="Furey T.S."/>
            <person name="Baertsch R.A."/>
            <person name="Brent M.R."/>
            <person name="Keibler E."/>
            <person name="Flicek P."/>
            <person name="Bork P."/>
            <person name="Suyama M."/>
            <person name="Bailey J.A."/>
            <person name="Portnoy M.E."/>
            <person name="Torrents D."/>
            <person name="Chinwalla A.T."/>
            <person name="Gish W.R."/>
            <person name="Eddy S.R."/>
            <person name="McPherson J.D."/>
            <person name="Olson M.V."/>
            <person name="Eichler E.E."/>
            <person name="Green E.D."/>
            <person name="Waterston R.H."/>
            <person name="Wilson R.K."/>
        </authorList>
    </citation>
    <scope>NUCLEOTIDE SEQUENCE [LARGE SCALE GENOMIC DNA]</scope>
</reference>
<reference key="8">
    <citation type="journal article" date="1990" name="Biochem. Biophys. Res. Commun.">
        <title>mdr1/P-glycoprotein gene segments analyzed from various human leukemic cell lines exhibiting different multidrug resistance profiles.</title>
        <authorList>
            <person name="Gekeler V."/>
            <person name="Weger S."/>
            <person name="Probst H."/>
        </authorList>
    </citation>
    <scope>NUCLEOTIDE SEQUENCE [GENOMIC DNA] OF 178-215 AND 800-856</scope>
</reference>
<reference key="9">
    <citation type="journal article" date="1989" name="Biochem. Biophys. Res. Commun.">
        <title>P-glycoprotein gene (MDR1) cDNA from human adrenal: normal P-glycoprotein carries Gly185 with an altered pattern of multidrug resistance.</title>
        <authorList>
            <person name="Kioka N."/>
            <person name="Tsubota J."/>
            <person name="Kakehi Y."/>
            <person name="Komano T."/>
            <person name="Gottesman M.M."/>
            <person name="Pastan I."/>
            <person name="Ueda K."/>
        </authorList>
    </citation>
    <scope>NUCLEOTIDE SEQUENCE [MRNA] OF 1-23 (ISOFORM 1/2)</scope>
</reference>
<reference key="10">
    <citation type="journal article" date="1996" name="Cell">
        <title>MDR1 P-glycoprotein is a lipid translocase of broad specificity, while MDR3 P-glycoprotein specifically translocates phosphatidylcholine.</title>
        <authorList>
            <person name="van Helvoort A."/>
            <person name="Smith A.J."/>
            <person name="Sprong H."/>
            <person name="Fritzsche I."/>
            <person name="Schinkel A.H."/>
            <person name="Borst P."/>
            <person name="van Meer G."/>
        </authorList>
    </citation>
    <scope>SUBCELLULAR LOCATION</scope>
    <scope>CATALYTIC ACTIVITY</scope>
    <scope>FUNCTION</scope>
    <scope>ACTIVITY REGULATION</scope>
</reference>
<reference key="11">
    <citation type="journal article" date="2001" name="Pharmacogenomics">
        <title>ABC drug transporters: hereditary polymorphisms and pharmacological impact in MDR1, MRP1 and MRP2.</title>
        <authorList>
            <person name="Kerb R."/>
            <person name="Hoffmeyer S."/>
            <person name="Brinkmann U."/>
        </authorList>
    </citation>
    <scope>REVIEW</scope>
</reference>
<reference key="12">
    <citation type="journal article" date="2005" name="Mol. Immunol.">
        <title>Cytoplasmic domains of the transporter associated with antigen processing and P-glycoprotein interact with subunits of the proteasome.</title>
        <authorList>
            <person name="Begley G.S."/>
            <person name="Horvath A.R."/>
            <person name="Taylor J.C."/>
            <person name="Higgins C.F."/>
        </authorList>
    </citation>
    <scope>INTERACTION WITH PSMB5</scope>
</reference>
<reference key="13">
    <citation type="journal article" date="2008" name="Proc. Natl. Acad. Sci. U.S.A.">
        <title>A quantitative atlas of mitotic phosphorylation.</title>
        <authorList>
            <person name="Dephoure N."/>
            <person name="Zhou C."/>
            <person name="Villen J."/>
            <person name="Beausoleil S.A."/>
            <person name="Bakalarski C.E."/>
            <person name="Elledge S.J."/>
            <person name="Gygi S.P."/>
        </authorList>
    </citation>
    <scope>IDENTIFICATION BY MASS SPECTROMETRY [LARGE SCALE ANALYSIS]</scope>
    <source>
        <tissue>Cervix carcinoma</tissue>
    </source>
</reference>
<reference key="14">
    <citation type="journal article" date="2011" name="BMC Syst. Biol.">
        <title>Initial characterization of the human central proteome.</title>
        <authorList>
            <person name="Burkard T.R."/>
            <person name="Planyavsky M."/>
            <person name="Kaupe I."/>
            <person name="Breitwieser F.P."/>
            <person name="Buerckstuemmer T."/>
            <person name="Bennett K.L."/>
            <person name="Superti-Furga G."/>
            <person name="Colinge J."/>
        </authorList>
    </citation>
    <scope>IDENTIFICATION BY MASS SPECTROMETRY [LARGE SCALE ANALYSIS]</scope>
</reference>
<reference key="15">
    <citation type="journal article" date="2014" name="Cancer Lett.">
        <title>Protein phosphatase complex PP5/PPP2R3C dephosphorylates P-glycoprotein/ABCB1 and down-regulates the expression and function.</title>
        <authorList>
            <person name="Katayama K."/>
            <person name="Yamaguchi M."/>
            <person name="Noguchi K."/>
            <person name="Sugimoto Y."/>
        </authorList>
    </citation>
    <scope>INTERACTION WITH PPP2R3C</scope>
</reference>
<reference key="16">
    <citation type="journal article" date="2017" name="J. Pharm. Sci.">
        <title>The Organic Anion-Transporting Peptide 2B1 Is Localized in the Basolateral Membrane of the Human Jejunum and Caco-2 Monolayers.</title>
        <authorList>
            <person name="Keiser M."/>
            <person name="Kaltheuner L."/>
            <person name="Wildberg C."/>
            <person name="Mueller J."/>
            <person name="Grube M."/>
            <person name="Partecke L.I."/>
            <person name="Heidecke C.D."/>
            <person name="Oswald S."/>
        </authorList>
    </citation>
    <scope>SUBCELLULAR LOCATION</scope>
    <scope>TISSUE SPECIFICITY</scope>
</reference>
<reference key="17">
    <citation type="journal article" date="2020" name="Ann. Clin. Transl. Neurol.">
        <title>Biallelic mutations in ABCB1 display recurrent reversible encephalopathy.</title>
        <authorList>
            <person name="Seo J."/>
            <person name="Lee C.R."/>
            <person name="Paeng J.C."/>
            <person name="Kwon H.W."/>
            <person name="Lee D."/>
            <person name="Kim S.C."/>
            <person name="Han J."/>
            <person name="Ku J.L."/>
            <person name="Chae J.H."/>
            <person name="Lim B.C."/>
            <person name="Choi M."/>
        </authorList>
    </citation>
    <scope>INVOLVEMENT IN ENPAT</scope>
</reference>
<reference key="18">
    <citation type="journal article" date="2020" name="N. Engl. J. Med.">
        <title>Serious Ivermectin toxicity and human ABCB1 nonsense mutations.</title>
        <authorList>
            <person name="Baudou E."/>
            <person name="Lespine A."/>
            <person name="Durrieu G."/>
            <person name="Andre F."/>
            <person name="Gandia P."/>
            <person name="Durand C."/>
            <person name="Cunat S."/>
        </authorList>
    </citation>
    <scope>VARIANT ENPAT 794-ARG--GLN-1280 DEL</scope>
    <scope>INVOLVEMENT IN ENPAT</scope>
</reference>
<reference key="19">
    <citation type="journal article" date="2022" name="Nat. Chem. Biol.">
        <title>Chemical genomics with pyrvinium identifies C1orf115 as a regulator of drug efflux.</title>
        <authorList>
            <person name="Masud S.N."/>
            <person name="Chandrashekhar M."/>
            <person name="Aregger M."/>
            <person name="Tan G."/>
            <person name="Zhang X."/>
            <person name="Mero P."/>
            <person name="Pirman D.A."/>
            <person name="Zaslaver O."/>
            <person name="Smolen G.A."/>
            <person name="Lin Z.Y."/>
            <person name="Wong C.J."/>
            <person name="Boone C."/>
            <person name="Gingras A.C."/>
            <person name="Montenegro-Burke J.R."/>
            <person name="Moffat J."/>
        </authorList>
    </citation>
    <scope>SUBCELLULAR LOCATION</scope>
    <scope>FUNCTION</scope>
</reference>
<reference evidence="31" key="20">
    <citation type="journal article" date="2022" name="PLoS Biol.">
        <title>Mechanistic basis for multidrug resistance and collateral drug sensitivity conferred to the malaria parasite by polymorphisms in PfMDR1 and PfCRT.</title>
        <authorList>
            <person name="Shafik S.H."/>
            <person name="Richards S.N."/>
            <person name="Corry B."/>
            <person name="Martin R.E."/>
        </authorList>
    </citation>
    <scope>FUNCTION</scope>
    <scope>CATALYTIC ACTIVITY</scope>
    <scope>ACTIVITY REGULATION</scope>
</reference>
<reference key="21">
    <citation type="journal article" date="1988" name="Cell">
        <title>An altered pattern of cross-resistance in multidrug-resistant human cells results from spontaneous mutations in the mdr1 (P-glycoprotein) gene.</title>
        <authorList>
            <person name="Choi K.H."/>
            <person name="Chen C.-J."/>
            <person name="Kriegler M."/>
            <person name="Roninson I.B."/>
        </authorList>
    </citation>
    <scope>VARIANT VAL-185</scope>
    <scope>POLYMORPHISM</scope>
    <scope>FUNCTION</scope>
</reference>
<reference key="22">
    <citation type="journal article" date="1998" name="Blood">
        <title>Genetic polymorphism in MDR-1: a tool for examining allelic expression in normal cells, unselected and drug-selected cell lines, and human tumors.</title>
        <authorList>
            <person name="Mickley L.A."/>
            <person name="Lee J.-S."/>
            <person name="Weng Z."/>
            <person name="Zhan Z."/>
            <person name="Alvarez M."/>
            <person name="Wilson W."/>
            <person name="Bates S.E."/>
            <person name="Fojo T."/>
        </authorList>
    </citation>
    <scope>VARIANTS ALA-893 AND THR-999</scope>
</reference>
<reference key="23">
    <citation type="journal article" date="2000" name="Hum. Mutat.">
        <title>A new polymorphism (N21D) in the exon 2 of the human MDR1 gene encoding the P-glycoprotein.</title>
        <authorList>
            <person name="Decleves X."/>
            <person name="Chevillard S."/>
            <person name="Charpentier C."/>
            <person name="Vielh P."/>
            <person name="Laplanche J.-L."/>
        </authorList>
    </citation>
    <scope>VARIANT ASP-21</scope>
</reference>
<reference key="24">
    <citation type="journal article" date="2000" name="Proc. Natl. Acad. Sci. U.S.A.">
        <title>Functional polymorphisms of the human multidrug-resistance gene: multiple sequence variations and correlation of one allele with P-glycoprotein expression and activity in vivo.</title>
        <authorList>
            <person name="Hoffmeyer S."/>
            <person name="Burk O."/>
            <person name="von Richter O."/>
            <person name="Arnold H.P."/>
            <person name="Brockmoeller J."/>
            <person name="Johne A."/>
            <person name="Cascorbi I."/>
            <person name="Gerloff T."/>
            <person name="Roots I."/>
            <person name="Eichelbaum M."/>
            <person name="Brinkmann U."/>
        </authorList>
    </citation>
    <scope>VARIANTS ASP-21; LEU-103 AND ASN-400</scope>
</reference>
<reference key="25">
    <citation type="journal article" date="2001" name="Clin. Pharmacol. Ther.">
        <title>Frequency of single nucleotide polymorphisms in the P-glycoprotein drug transporter MDR1 gene in white subjects.</title>
        <authorList>
            <person name="Cascorbi I."/>
            <person name="Gerloff T."/>
            <person name="Johne A."/>
            <person name="Meisel C."/>
            <person name="Hoffmeyer S."/>
            <person name="Schwab M."/>
            <person name="Schaeffeler E."/>
            <person name="Eichelbaum M."/>
            <person name="Brinkmann U."/>
            <person name="Roots I."/>
        </authorList>
    </citation>
    <scope>VARIANTS ASP-21; ASN-400; ALA-893; THR-893 AND PRO-1107</scope>
</reference>
<reference key="26">
    <citation type="journal article" date="2002" name="Drug Metab. Pharmacokinet.">
        <title>Polymorphism of MDR1 gene in healthy Japanese subjects: a novel SNP with an amino acid substitution (Glu108Lys).</title>
        <authorList>
            <person name="Honda T."/>
            <person name="Dan Y."/>
            <person name="Koyabu N."/>
            <person name="Ieiri I."/>
            <person name="Otsubo K."/>
            <person name="Higuchi S."/>
            <person name="Ohtani H."/>
            <person name="Sawada J."/>
        </authorList>
    </citation>
    <scope>VARIANT LYS-108</scope>
</reference>
<reference key="27">
    <citation type="journal article" date="2002" name="Drug Metab. Pharmacokinet.">
        <title>Twelve novel single nucleotide polymorphisms in ABCB1/MDR1 among Japanese patients with ventricular tachycardia who were administered amiodarone.</title>
        <authorList>
            <person name="Itoda M."/>
            <person name="Saito Y."/>
            <person name="Komamura K."/>
            <person name="Ueno K."/>
            <person name="Kamakura S."/>
            <person name="Ozawa S."/>
            <person name="Sawada J."/>
        </authorList>
    </citation>
    <scope>VARIANT ILE-1251</scope>
</reference>
<reference key="28">
    <citation type="journal article" date="2002" name="J. Hum. Genet.">
        <title>Three hundred twenty-six genetic variations in genes encoding nine members of ATP-binding cassette, subfamily B (ABCB/MDR/TAP), in the Japanese population.</title>
        <authorList>
            <person name="Saito S."/>
            <person name="Iida A."/>
            <person name="Sekine A."/>
            <person name="Miura Y."/>
            <person name="Ogawa C."/>
            <person name="Kawauchi S."/>
            <person name="Higuchi S."/>
            <person name="Nakamura Y."/>
        </authorList>
    </citation>
    <scope>VARIANTS ALA-893 AND THR-893</scope>
</reference>
<reference key="29">
    <citation type="journal article" date="2003" name="Am. J. Hum. Genet.">
        <title>MDR1 Ala893 polymorphism is associated with inflammatory bowel disease.</title>
        <authorList>
            <person name="Brant S.R."/>
            <person name="Panhuysen C.I.M."/>
            <person name="Nicolae D."/>
            <person name="Reddy D.M."/>
            <person name="Bonen D.K."/>
            <person name="Karaliukas R."/>
            <person name="Zhang L."/>
            <person name="Swanson E."/>
            <person name="Datta L.W."/>
            <person name="Moran T."/>
            <person name="Ravenhill G."/>
            <person name="Duerr R.H."/>
            <person name="Achkar J.-P."/>
            <person name="Karban A.S."/>
            <person name="Cho J.H."/>
        </authorList>
    </citation>
    <scope>VARIANTS ALA-893 AND THR-893</scope>
    <scope>ASSOCIATION WITH SUSCEPTIBILITY TO IBD13</scope>
</reference>
<reference key="30">
    <citation type="journal article" date="2004" name="Am. J. Hum. Genet.">
        <authorList>
            <person name="Brant S.R."/>
            <person name="Panhuysen C.I.M."/>
            <person name="Nicolae D."/>
            <person name="Reddy D.M."/>
            <person name="Bonen D.K."/>
            <person name="Karaliukas R."/>
            <person name="Zhang L."/>
            <person name="Swanson E."/>
            <person name="Datta L.W."/>
            <person name="Moran T."/>
            <person name="Ravenhill G."/>
            <person name="Duerr R.H."/>
            <person name="Achkar J.-P."/>
            <person name="Karban A.S."/>
            <person name="Cho J.H."/>
        </authorList>
    </citation>
    <scope>ERRATUM OF PUBMED:14610718</scope>
</reference>
<reference key="31">
    <citation type="journal article" date="2006" name="Science">
        <title>The consensus coding sequences of human breast and colorectal cancers.</title>
        <authorList>
            <person name="Sjoeblom T."/>
            <person name="Jones S."/>
            <person name="Wood L.D."/>
            <person name="Parsons D.W."/>
            <person name="Lin J."/>
            <person name="Barber T.D."/>
            <person name="Mandelker D."/>
            <person name="Leary R.J."/>
            <person name="Ptak J."/>
            <person name="Silliman N."/>
            <person name="Szabo S."/>
            <person name="Buckhaults P."/>
            <person name="Farrell C."/>
            <person name="Meeh P."/>
            <person name="Markowitz S.D."/>
            <person name="Willis J."/>
            <person name="Dawson D."/>
            <person name="Willson J.K.V."/>
            <person name="Gazdar A.F."/>
            <person name="Hartigan J."/>
            <person name="Wu L."/>
            <person name="Liu C."/>
            <person name="Parmigiani G."/>
            <person name="Park B.H."/>
            <person name="Bachman K.E."/>
            <person name="Papadopoulos N."/>
            <person name="Vogelstein B."/>
            <person name="Kinzler K.W."/>
            <person name="Velculescu V.E."/>
        </authorList>
    </citation>
    <scope>VARIANT [LARGE SCALE ANALYSIS] ASN-887</scope>
</reference>
<evidence type="ECO:0000250" key="1"/>
<evidence type="ECO:0000250" key="2">
    <source>
        <dbReference type="UniProtKB" id="P06795"/>
    </source>
</evidence>
<evidence type="ECO:0000255" key="3"/>
<evidence type="ECO:0000255" key="4">
    <source>
        <dbReference type="PROSITE-ProRule" id="PRU00434"/>
    </source>
</evidence>
<evidence type="ECO:0000255" key="5">
    <source>
        <dbReference type="PROSITE-ProRule" id="PRU00441"/>
    </source>
</evidence>
<evidence type="ECO:0000256" key="6">
    <source>
        <dbReference type="SAM" id="MobiDB-lite"/>
    </source>
</evidence>
<evidence type="ECO:0000269" key="7">
    <source>
    </source>
</evidence>
<evidence type="ECO:0000269" key="8">
    <source>
    </source>
</evidence>
<evidence type="ECO:0000269" key="9">
    <source>
    </source>
</evidence>
<evidence type="ECO:0000269" key="10">
    <source>
    </source>
</evidence>
<evidence type="ECO:0000269" key="11">
    <source>
    </source>
</evidence>
<evidence type="ECO:0000269" key="12">
    <source>
    </source>
</evidence>
<evidence type="ECO:0000269" key="13">
    <source>
    </source>
</evidence>
<evidence type="ECO:0000269" key="14">
    <source>
    </source>
</evidence>
<evidence type="ECO:0000269" key="15">
    <source>
    </source>
</evidence>
<evidence type="ECO:0000269" key="16">
    <source>
    </source>
</evidence>
<evidence type="ECO:0000269" key="17">
    <source>
    </source>
</evidence>
<evidence type="ECO:0000269" key="18">
    <source>
    </source>
</evidence>
<evidence type="ECO:0000269" key="19">
    <source>
    </source>
</evidence>
<evidence type="ECO:0000269" key="20">
    <source>
    </source>
</evidence>
<evidence type="ECO:0000269" key="21">
    <source>
    </source>
</evidence>
<evidence type="ECO:0000269" key="22">
    <source>
    </source>
</evidence>
<evidence type="ECO:0000269" key="23">
    <source>
    </source>
</evidence>
<evidence type="ECO:0000269" key="24">
    <source>
    </source>
</evidence>
<evidence type="ECO:0000269" key="25">
    <source>
    </source>
</evidence>
<evidence type="ECO:0000269" key="26">
    <source>
    </source>
</evidence>
<evidence type="ECO:0000269" key="27">
    <source>
    </source>
</evidence>
<evidence type="ECO:0000269" key="28">
    <source>
    </source>
</evidence>
<evidence type="ECO:0000269" key="29">
    <source ref="5"/>
</evidence>
<evidence type="ECO:0000303" key="30">
    <source ref="4"/>
</evidence>
<evidence type="ECO:0000305" key="31"/>
<evidence type="ECO:0000312" key="32">
    <source>
        <dbReference type="HGNC" id="HGNC:40"/>
    </source>
</evidence>
<evidence type="ECO:0007829" key="33">
    <source>
        <dbReference type="PDB" id="6C0V"/>
    </source>
</evidence>
<evidence type="ECO:0007829" key="34">
    <source>
        <dbReference type="PDB" id="7A69"/>
    </source>
</evidence>
<evidence type="ECO:0007829" key="35">
    <source>
        <dbReference type="PDB" id="7A6F"/>
    </source>
</evidence>
<evidence type="ECO:0007829" key="36">
    <source>
        <dbReference type="PDB" id="7O9W"/>
    </source>
</evidence>
<evidence type="ECO:0007829" key="37">
    <source>
        <dbReference type="PDB" id="8Y6H"/>
    </source>
</evidence>
<evidence type="ECO:0007829" key="38">
    <source>
        <dbReference type="PDB" id="8Y6I"/>
    </source>
</evidence>
<gene>
    <name evidence="32" type="primary">ABCB1</name>
    <name type="synonym">MDR1</name>
    <name type="synonym">PGY1</name>
</gene>
<proteinExistence type="evidence at protein level"/>
<feature type="chain" id="PRO_0000093332" description="ATP-dependent translocase ABCB1">
    <location>
        <begin position="1"/>
        <end position="1280"/>
    </location>
</feature>
<feature type="topological domain" description="Cytoplasmic" evidence="1">
    <location>
        <begin position="1"/>
        <end position="44"/>
    </location>
</feature>
<feature type="transmembrane region" description="Helical" evidence="5">
    <location>
        <begin position="45"/>
        <end position="67"/>
    </location>
</feature>
<feature type="topological domain" description="Extracellular" evidence="1">
    <location>
        <begin position="68"/>
        <end position="116"/>
    </location>
</feature>
<feature type="transmembrane region" description="Helical" evidence="5">
    <location>
        <begin position="117"/>
        <end position="137"/>
    </location>
</feature>
<feature type="topological domain" description="Cytoplasmic" evidence="1">
    <location>
        <begin position="138"/>
        <end position="186"/>
    </location>
</feature>
<feature type="transmembrane region" description="Helical" evidence="5">
    <location>
        <begin position="187"/>
        <end position="208"/>
    </location>
</feature>
<feature type="topological domain" description="Extracellular" evidence="1">
    <location>
        <begin position="209"/>
        <end position="215"/>
    </location>
</feature>
<feature type="transmembrane region" description="Helical" evidence="5">
    <location>
        <begin position="216"/>
        <end position="236"/>
    </location>
</feature>
<feature type="topological domain" description="Cytoplasmic" evidence="1">
    <location>
        <begin position="237"/>
        <end position="292"/>
    </location>
</feature>
<feature type="transmembrane region" description="Helical" evidence="5">
    <location>
        <begin position="293"/>
        <end position="316"/>
    </location>
</feature>
<feature type="topological domain" description="Extracellular" evidence="1">
    <location>
        <begin position="317"/>
        <end position="330"/>
    </location>
</feature>
<feature type="transmembrane region" description="Helical" evidence="5">
    <location>
        <begin position="331"/>
        <end position="352"/>
    </location>
</feature>
<feature type="topological domain" description="Cytoplasmic" evidence="1">
    <location>
        <begin position="353"/>
        <end position="711"/>
    </location>
</feature>
<feature type="transmembrane region" description="Helical" evidence="5">
    <location>
        <begin position="712"/>
        <end position="732"/>
    </location>
</feature>
<feature type="topological domain" description="Extracellular" evidence="1">
    <location>
        <begin position="733"/>
        <end position="756"/>
    </location>
</feature>
<feature type="transmembrane region" description="Helical" evidence="5">
    <location>
        <begin position="757"/>
        <end position="777"/>
    </location>
</feature>
<feature type="topological domain" description="Cytoplasmic" evidence="1">
    <location>
        <begin position="778"/>
        <end position="832"/>
    </location>
</feature>
<feature type="transmembrane region" description="Helical" evidence="5">
    <location>
        <begin position="833"/>
        <end position="853"/>
    </location>
</feature>
<feature type="topological domain" description="Extracellular" evidence="1">
    <location>
        <position position="854"/>
    </location>
</feature>
<feature type="transmembrane region" description="Helical" evidence="5">
    <location>
        <begin position="855"/>
        <end position="874"/>
    </location>
</feature>
<feature type="topological domain" description="Cytoplasmic" evidence="1">
    <location>
        <begin position="875"/>
        <end position="934"/>
    </location>
</feature>
<feature type="transmembrane region" description="Helical" evidence="5">
    <location>
        <begin position="935"/>
        <end position="957"/>
    </location>
</feature>
<feature type="topological domain" description="Extracellular" evidence="1">
    <location>
        <begin position="958"/>
        <end position="973"/>
    </location>
</feature>
<feature type="transmembrane region" description="Helical" evidence="5">
    <location>
        <begin position="974"/>
        <end position="995"/>
    </location>
</feature>
<feature type="topological domain" description="Cytoplasmic" evidence="1">
    <location>
        <begin position="996"/>
        <end position="1280"/>
    </location>
</feature>
<feature type="domain" description="ABC transmembrane type-1 1" evidence="5">
    <location>
        <begin position="51"/>
        <end position="357"/>
    </location>
</feature>
<feature type="domain" description="ABC transporter 1" evidence="4">
    <location>
        <begin position="392"/>
        <end position="628"/>
    </location>
</feature>
<feature type="domain" description="ABC transmembrane type-1 2" evidence="5">
    <location>
        <begin position="711"/>
        <end position="1000"/>
    </location>
</feature>
<feature type="domain" description="ABC transporter 2" evidence="4">
    <location>
        <begin position="1035"/>
        <end position="1273"/>
    </location>
</feature>
<feature type="region of interest" description="Disordered" evidence="6">
    <location>
        <begin position="646"/>
        <end position="685"/>
    </location>
</feature>
<feature type="compositionally biased region" description="Basic residues" evidence="6">
    <location>
        <begin position="662"/>
        <end position="672"/>
    </location>
</feature>
<feature type="binding site" evidence="4">
    <location>
        <begin position="427"/>
        <end position="434"/>
    </location>
    <ligand>
        <name>ATP</name>
        <dbReference type="ChEBI" id="CHEBI:30616"/>
        <label>1</label>
    </ligand>
</feature>
<feature type="binding site" evidence="4">
    <location>
        <begin position="1070"/>
        <end position="1077"/>
    </location>
    <ligand>
        <name>ATP</name>
        <dbReference type="ChEBI" id="CHEBI:30616"/>
        <label>2</label>
    </ligand>
</feature>
<feature type="modified residue" description="Phosphoserine" evidence="2">
    <location>
        <position position="660"/>
    </location>
</feature>
<feature type="glycosylation site" description="N-linked (GlcNAc...) asparagine" evidence="3">
    <location>
        <position position="91"/>
    </location>
</feature>
<feature type="glycosylation site" description="N-linked (GlcNAc...) asparagine" evidence="3">
    <location>
        <position position="94"/>
    </location>
</feature>
<feature type="glycosylation site" description="N-linked (GlcNAc...) asparagine" evidence="3">
    <location>
        <position position="99"/>
    </location>
</feature>
<feature type="splice variant" id="VSP_055769" description="In isoform 2." evidence="30">
    <original>RYAYYYSGIGAGVLVAAYIQVSFWCLAAGRQIHKIRKQFFHAIMRQEIGWFDVHDVGELNTRLTD</original>
    <variation>S</variation>
    <location>
        <begin position="113"/>
        <end position="177"/>
    </location>
</feature>
<feature type="sequence variant" id="VAR_022276" description="In dbSNP:rs28381804." evidence="29">
    <original>F</original>
    <variation>L</variation>
    <location>
        <position position="17"/>
    </location>
</feature>
<feature type="sequence variant" id="VAR_014704" description="In dbSNP:rs9282564." evidence="7 8 9 12 29">
    <original>N</original>
    <variation>D</variation>
    <location>
        <position position="21"/>
    </location>
</feature>
<feature type="sequence variant" id="VAR_055423" description="In dbSNP:rs1202183.">
    <original>N</original>
    <variation>S</variation>
    <location>
        <position position="44"/>
    </location>
</feature>
<feature type="sequence variant" id="VAR_055424" description="In dbSNP:rs9282565.">
    <original>A</original>
    <variation>E</variation>
    <location>
        <position position="80"/>
    </location>
</feature>
<feature type="sequence variant" id="VAR_015001" evidence="7">
    <original>F</original>
    <variation>L</variation>
    <location>
        <position position="103"/>
    </location>
</feature>
<feature type="sequence variant" id="VAR_018351" evidence="14">
    <original>E</original>
    <variation>K</variation>
    <location>
        <position position="108"/>
    </location>
</feature>
<feature type="sequence variant" id="VAR_015002" description="In a colchicine-selected multidrug-resistant cell line; confers increased resistance to colchicine; dbSNP:rs1128501." evidence="20 21 27">
    <original>G</original>
    <variation>V</variation>
    <location>
        <position position="185"/>
    </location>
</feature>
<feature type="sequence variant" id="VAR_055425" description="In dbSNP:rs36008564.">
    <original>I</original>
    <variation>V</variation>
    <location>
        <position position="261"/>
    </location>
</feature>
<feature type="sequence variant" id="VAR_015003" description="In dbSNP:rs2229109." evidence="7 9 29">
    <original>S</original>
    <variation>N</variation>
    <location>
        <position position="400"/>
    </location>
</feature>
<feature type="sequence variant" id="VAR_022277" description="In dbSNP:rs28381902." evidence="29">
    <original>E</original>
    <variation>K</variation>
    <location>
        <position position="566"/>
    </location>
</feature>
<feature type="sequence variant" id="VAR_022278" description="In dbSNP:rs28381914." evidence="29">
    <original>R</original>
    <variation>C</variation>
    <location>
        <position position="593"/>
    </location>
</feature>
<feature type="sequence variant" id="VAR_055426" description="In dbSNP:rs2235036.">
    <original>A</original>
    <variation>T</variation>
    <location>
        <position position="599"/>
    </location>
</feature>
<feature type="sequence variant" id="VAR_055427" description="In dbSNP:rs35023033.">
    <original>R</original>
    <variation>C</variation>
    <location>
        <position position="669"/>
    </location>
</feature>
<feature type="sequence variant" id="VAR_090053" description="In ENPAT; likely pathogenic." evidence="23">
    <location>
        <begin position="794"/>
        <end position="1280"/>
    </location>
</feature>
<feature type="sequence variant" id="VAR_055428" description="In dbSNP:rs2235039.">
    <original>V</original>
    <variation>M</variation>
    <location>
        <position position="801"/>
    </location>
</feature>
<feature type="sequence variant" id="VAR_055429" description="In dbSNP:rs2032581.">
    <original>I</original>
    <variation>V</variation>
    <location>
        <position position="829"/>
    </location>
</feature>
<feature type="sequence variant" id="VAR_022279" description="In dbSNP:rs28381967." evidence="29">
    <original>I</original>
    <variation>V</variation>
    <location>
        <position position="836"/>
    </location>
</feature>
<feature type="sequence variant" id="VAR_035737" description="In a colorectal cancer sample; somatic mutation." evidence="16">
    <original>K</original>
    <variation>N</variation>
    <location>
        <position position="887"/>
    </location>
</feature>
<feature type="sequence variant" id="VAR_013361" description="Risk factor for IBD13; has decreased enzyme activity; dbSNP:rs2032582." evidence="9 10 11 17 20 27 28 29">
    <original>S</original>
    <variation>A</variation>
    <location>
        <position position="893"/>
    </location>
</feature>
<feature type="sequence variant" id="VAR_013362" description="Rare allele; dbSNP:rs2032582." evidence="9 10 11">
    <original>S</original>
    <variation>T</variation>
    <location>
        <position position="893"/>
    </location>
</feature>
<feature type="sequence variant" id="VAR_018352" description="In dbSNP:rs926081975.">
    <original>M</original>
    <variation>V</variation>
    <location>
        <position position="986"/>
    </location>
</feature>
<feature type="sequence variant" id="VAR_015004" description="In dbSNP:rs72552784." evidence="28">
    <original>A</original>
    <variation>T</variation>
    <location>
        <position position="999"/>
    </location>
</feature>
<feature type="sequence variant" id="VAR_022280" description="In dbSNP:rs28401798." evidence="29">
    <original>P</original>
    <variation>A</variation>
    <location>
        <position position="1051"/>
    </location>
</feature>
<feature type="sequence variant" id="VAR_015005" description="In dbSNP:rs55852620." evidence="9">
    <original>Q</original>
    <variation>P</variation>
    <location>
        <position position="1107"/>
    </location>
</feature>
<feature type="sequence variant" id="VAR_022281" description="In dbSNP:rs2229107." evidence="29">
    <original>S</original>
    <variation>T</variation>
    <location>
        <position position="1141"/>
    </location>
</feature>
<feature type="sequence variant" id="VAR_018353" description="In dbSNP:rs28364274." evidence="15 29">
    <original>V</original>
    <variation>I</variation>
    <location>
        <position position="1251"/>
    </location>
</feature>
<feature type="sequence conflict" description="In Ref. 9; CAA41558." evidence="31" ref="9">
    <original>S</original>
    <variation>R</variation>
    <location>
        <position position="23"/>
    </location>
</feature>
<feature type="sequence conflict" description="In Ref. 3; AAB69423." evidence="31" ref="3">
    <location>
        <position position="336"/>
    </location>
</feature>
<feature type="helix" evidence="37">
    <location>
        <begin position="38"/>
        <end position="40"/>
    </location>
</feature>
<feature type="helix" evidence="37">
    <location>
        <begin position="45"/>
        <end position="62"/>
    </location>
</feature>
<feature type="helix" evidence="37">
    <location>
        <begin position="64"/>
        <end position="88"/>
    </location>
</feature>
<feature type="helix" evidence="37">
    <location>
        <begin position="107"/>
        <end position="154"/>
    </location>
</feature>
<feature type="turn" evidence="38">
    <location>
        <begin position="160"/>
        <end position="162"/>
    </location>
</feature>
<feature type="helix" evidence="33">
    <location>
        <begin position="168"/>
        <end position="170"/>
    </location>
</feature>
<feature type="helix" evidence="37">
    <location>
        <begin position="173"/>
        <end position="186"/>
    </location>
</feature>
<feature type="helix" evidence="37">
    <location>
        <begin position="188"/>
        <end position="210"/>
    </location>
</feature>
<feature type="helix" evidence="37">
    <location>
        <begin position="212"/>
        <end position="219"/>
    </location>
</feature>
<feature type="helix" evidence="37">
    <location>
        <begin position="222"/>
        <end position="237"/>
    </location>
</feature>
<feature type="helix" evidence="37">
    <location>
        <begin position="239"/>
        <end position="246"/>
    </location>
</feature>
<feature type="helix" evidence="37">
    <location>
        <begin position="248"/>
        <end position="258"/>
    </location>
</feature>
<feature type="helix" evidence="37">
    <location>
        <begin position="261"/>
        <end position="267"/>
    </location>
</feature>
<feature type="helix" evidence="37">
    <location>
        <begin position="270"/>
        <end position="322"/>
    </location>
</feature>
<feature type="helix" evidence="37">
    <location>
        <begin position="328"/>
        <end position="347"/>
    </location>
</feature>
<feature type="helix" evidence="37">
    <location>
        <begin position="350"/>
        <end position="370"/>
    </location>
</feature>
<feature type="strand" evidence="35">
    <location>
        <begin position="377"/>
        <end position="379"/>
    </location>
</feature>
<feature type="strand" evidence="34">
    <location>
        <begin position="392"/>
        <end position="398"/>
    </location>
</feature>
<feature type="strand" evidence="36">
    <location>
        <begin position="402"/>
        <end position="404"/>
    </location>
</feature>
<feature type="strand" evidence="33">
    <location>
        <begin position="410"/>
        <end position="412"/>
    </location>
</feature>
<feature type="strand" evidence="34">
    <location>
        <begin position="415"/>
        <end position="417"/>
    </location>
</feature>
<feature type="strand" evidence="34">
    <location>
        <begin position="422"/>
        <end position="426"/>
    </location>
</feature>
<feature type="helix" evidence="34">
    <location>
        <begin position="433"/>
        <end position="440"/>
    </location>
</feature>
<feature type="strand" evidence="34">
    <location>
        <begin position="447"/>
        <end position="457"/>
    </location>
</feature>
<feature type="helix" evidence="34">
    <location>
        <begin position="458"/>
        <end position="460"/>
    </location>
</feature>
<feature type="helix" evidence="34">
    <location>
        <begin position="463"/>
        <end position="468"/>
    </location>
</feature>
<feature type="strand" evidence="34">
    <location>
        <begin position="470"/>
        <end position="473"/>
    </location>
</feature>
<feature type="strand" evidence="34">
    <location>
        <begin position="481"/>
        <end position="483"/>
    </location>
</feature>
<feature type="helix" evidence="34">
    <location>
        <begin position="484"/>
        <end position="489"/>
    </location>
</feature>
<feature type="helix" evidence="34">
    <location>
        <begin position="497"/>
        <end position="506"/>
    </location>
</feature>
<feature type="turn" evidence="35">
    <location>
        <begin position="507"/>
        <end position="510"/>
    </location>
</feature>
<feature type="helix" evidence="34">
    <location>
        <begin position="511"/>
        <end position="515"/>
    </location>
</feature>
<feature type="strand" evidence="34">
    <location>
        <begin position="516"/>
        <end position="518"/>
    </location>
</feature>
<feature type="turn" evidence="34">
    <location>
        <begin position="519"/>
        <end position="521"/>
    </location>
</feature>
<feature type="helix" evidence="34">
    <location>
        <begin position="526"/>
        <end position="528"/>
    </location>
</feature>
<feature type="helix" evidence="34">
    <location>
        <begin position="533"/>
        <end position="545"/>
    </location>
</feature>
<feature type="strand" evidence="34">
    <location>
        <begin position="550"/>
        <end position="556"/>
    </location>
</feature>
<feature type="strand" evidence="33">
    <location>
        <begin position="559"/>
        <end position="561"/>
    </location>
</feature>
<feature type="helix" evidence="34">
    <location>
        <begin position="563"/>
        <end position="573"/>
    </location>
</feature>
<feature type="strand" evidence="34">
    <location>
        <begin position="578"/>
        <end position="585"/>
    </location>
</feature>
<feature type="turn" evidence="34">
    <location>
        <begin position="590"/>
        <end position="594"/>
    </location>
</feature>
<feature type="strand" evidence="34">
    <location>
        <begin position="595"/>
        <end position="602"/>
    </location>
</feature>
<feature type="strand" evidence="34">
    <location>
        <begin position="605"/>
        <end position="608"/>
    </location>
</feature>
<feature type="helix" evidence="34">
    <location>
        <begin position="612"/>
        <end position="618"/>
    </location>
</feature>
<feature type="helix" evidence="34">
    <location>
        <begin position="621"/>
        <end position="629"/>
    </location>
</feature>
<feature type="helix" evidence="37">
    <location>
        <begin position="697"/>
        <end position="701"/>
    </location>
</feature>
<feature type="helix" evidence="37">
    <location>
        <begin position="702"/>
        <end position="707"/>
    </location>
</feature>
<feature type="helix" evidence="37">
    <location>
        <begin position="708"/>
        <end position="722"/>
    </location>
</feature>
<feature type="helix" evidence="37">
    <location>
        <begin position="724"/>
        <end position="737"/>
    </location>
</feature>
<feature type="helix" evidence="37">
    <location>
        <begin position="738"/>
        <end position="740"/>
    </location>
</feature>
<feature type="strand" evidence="33">
    <location>
        <begin position="741"/>
        <end position="743"/>
    </location>
</feature>
<feature type="helix" evidence="37">
    <location>
        <begin position="745"/>
        <end position="797"/>
    </location>
</feature>
<feature type="helix" evidence="38">
    <location>
        <begin position="801"/>
        <end position="805"/>
    </location>
</feature>
<feature type="strand" evidence="33">
    <location>
        <begin position="806"/>
        <end position="808"/>
    </location>
</feature>
<feature type="helix" evidence="37">
    <location>
        <begin position="811"/>
        <end position="819"/>
    </location>
</feature>
<feature type="helix" evidence="37">
    <location>
        <begin position="821"/>
        <end position="824"/>
    </location>
</feature>
<feature type="helix" evidence="37">
    <location>
        <begin position="825"/>
        <end position="828"/>
    </location>
</feature>
<feature type="helix" evidence="37">
    <location>
        <begin position="830"/>
        <end position="853"/>
    </location>
</feature>
<feature type="helix" evidence="37">
    <location>
        <begin position="855"/>
        <end position="862"/>
    </location>
</feature>
<feature type="helix" evidence="37">
    <location>
        <begin position="865"/>
        <end position="879"/>
    </location>
</feature>
<feature type="turn" evidence="37">
    <location>
        <begin position="889"/>
        <end position="893"/>
    </location>
</feature>
<feature type="helix" evidence="37">
    <location>
        <begin position="894"/>
        <end position="899"/>
    </location>
</feature>
<feature type="helix" evidence="38">
    <location>
        <begin position="904"/>
        <end position="910"/>
    </location>
</feature>
<feature type="helix" evidence="37">
    <location>
        <begin position="914"/>
        <end position="923"/>
    </location>
</feature>
<feature type="helix" evidence="37">
    <location>
        <begin position="925"/>
        <end position="965"/>
    </location>
</feature>
<feature type="helix" evidence="37">
    <location>
        <begin position="971"/>
        <end position="992"/>
    </location>
</feature>
<feature type="helix" evidence="37">
    <location>
        <begin position="998"/>
        <end position="1013"/>
    </location>
</feature>
<feature type="strand" evidence="34">
    <location>
        <begin position="1035"/>
        <end position="1041"/>
    </location>
</feature>
<feature type="strand" evidence="33">
    <location>
        <begin position="1045"/>
        <end position="1047"/>
    </location>
</feature>
<feature type="strand" evidence="34">
    <location>
        <begin position="1048"/>
        <end position="1052"/>
    </location>
</feature>
<feature type="strand" evidence="34">
    <location>
        <begin position="1056"/>
        <end position="1060"/>
    </location>
</feature>
<feature type="strand" evidence="34">
    <location>
        <begin position="1066"/>
        <end position="1069"/>
    </location>
</feature>
<feature type="strand" evidence="34">
    <location>
        <begin position="1074"/>
        <end position="1077"/>
    </location>
</feature>
<feature type="helix" evidence="34">
    <location>
        <begin position="1078"/>
        <end position="1083"/>
    </location>
</feature>
<feature type="strand" evidence="34">
    <location>
        <begin position="1090"/>
        <end position="1096"/>
    </location>
</feature>
<feature type="turn" evidence="34">
    <location>
        <begin position="1101"/>
        <end position="1103"/>
    </location>
</feature>
<feature type="helix" evidence="34">
    <location>
        <begin position="1106"/>
        <end position="1112"/>
    </location>
</feature>
<feature type="strand" evidence="34">
    <location>
        <begin position="1114"/>
        <end position="1116"/>
    </location>
</feature>
<feature type="strand" evidence="33">
    <location>
        <begin position="1124"/>
        <end position="1126"/>
    </location>
</feature>
<feature type="helix" evidence="34">
    <location>
        <begin position="1128"/>
        <end position="1131"/>
    </location>
</feature>
<feature type="helix" evidence="34">
    <location>
        <begin position="1142"/>
        <end position="1151"/>
    </location>
</feature>
<feature type="helix" evidence="34">
    <location>
        <begin position="1155"/>
        <end position="1159"/>
    </location>
</feature>
<feature type="strand" evidence="34">
    <location>
        <begin position="1161"/>
        <end position="1163"/>
    </location>
</feature>
<feature type="helix" evidence="33">
    <location>
        <begin position="1164"/>
        <end position="1166"/>
    </location>
</feature>
<feature type="helix" evidence="34">
    <location>
        <begin position="1171"/>
        <end position="1173"/>
    </location>
</feature>
<feature type="helix" evidence="34">
    <location>
        <begin position="1178"/>
        <end position="1190"/>
    </location>
</feature>
<feature type="strand" evidence="34">
    <location>
        <begin position="1195"/>
        <end position="1201"/>
    </location>
</feature>
<feature type="helix" evidence="34">
    <location>
        <begin position="1208"/>
        <end position="1222"/>
    </location>
</feature>
<feature type="strand" evidence="34">
    <location>
        <begin position="1225"/>
        <end position="1230"/>
    </location>
</feature>
<feature type="helix" evidence="34">
    <location>
        <begin position="1235"/>
        <end position="1238"/>
    </location>
</feature>
<feature type="strand" evidence="34">
    <location>
        <begin position="1240"/>
        <end position="1247"/>
    </location>
</feature>
<feature type="strand" evidence="34">
    <location>
        <begin position="1250"/>
        <end position="1256"/>
    </location>
</feature>
<feature type="helix" evidence="34">
    <location>
        <begin position="1257"/>
        <end position="1262"/>
    </location>
</feature>
<feature type="helix" evidence="34">
    <location>
        <begin position="1266"/>
        <end position="1271"/>
    </location>
</feature>
<feature type="strand" evidence="36">
    <location>
        <begin position="1272"/>
        <end position="1274"/>
    </location>
</feature>
<organism>
    <name type="scientific">Homo sapiens</name>
    <name type="common">Human</name>
    <dbReference type="NCBI Taxonomy" id="9606"/>
    <lineage>
        <taxon>Eukaryota</taxon>
        <taxon>Metazoa</taxon>
        <taxon>Chordata</taxon>
        <taxon>Craniata</taxon>
        <taxon>Vertebrata</taxon>
        <taxon>Euteleostomi</taxon>
        <taxon>Mammalia</taxon>
        <taxon>Eutheria</taxon>
        <taxon>Euarchontoglires</taxon>
        <taxon>Primates</taxon>
        <taxon>Haplorrhini</taxon>
        <taxon>Catarrhini</taxon>
        <taxon>Hominidae</taxon>
        <taxon>Homo</taxon>
    </lineage>
</organism>